<accession>O15553</accession>
<accession>D3DUC0</accession>
<accession>F5H0Q3</accession>
<accession>Q3MJ84</accession>
<accession>Q96PN4</accession>
<accession>Q96PN5</accession>
<dbReference type="EMBL" id="AF018080">
    <property type="protein sequence ID" value="AAB70557.1"/>
    <property type="molecule type" value="mRNA"/>
</dbReference>
<dbReference type="EMBL" id="CH471112">
    <property type="protein sequence ID" value="EAW85382.1"/>
    <property type="molecule type" value="Genomic_DNA"/>
</dbReference>
<dbReference type="EMBL" id="CH471112">
    <property type="protein sequence ID" value="EAW85383.1"/>
    <property type="molecule type" value="Genomic_DNA"/>
</dbReference>
<dbReference type="EMBL" id="BC101511">
    <property type="protein sequence ID" value="AAI01512.1"/>
    <property type="molecule type" value="mRNA"/>
</dbReference>
<dbReference type="EMBL" id="BC101537">
    <property type="protein sequence ID" value="AAI01538.1"/>
    <property type="molecule type" value="mRNA"/>
</dbReference>
<dbReference type="EMBL" id="Y14441">
    <property type="protein sequence ID" value="CAA74793.1"/>
    <property type="molecule type" value="mRNA"/>
</dbReference>
<dbReference type="EMBL" id="AJ003147">
    <property type="protein sequence ID" value="CAA05906.1"/>
    <property type="molecule type" value="Genomic_DNA"/>
</dbReference>
<dbReference type="EMBL" id="AF111163">
    <property type="protein sequence ID" value="AAD26152.1"/>
    <property type="molecule type" value="Genomic_DNA"/>
</dbReference>
<dbReference type="EMBL" id="AF301150">
    <property type="protein sequence ID" value="AAK97223.1"/>
    <property type="molecule type" value="Genomic_DNA"/>
</dbReference>
<dbReference type="EMBL" id="AF301151">
    <property type="protein sequence ID" value="AAK97224.1"/>
    <property type="molecule type" value="Genomic_DNA"/>
</dbReference>
<dbReference type="CCDS" id="CCDS10498.1">
    <molecule id="O15553-2"/>
</dbReference>
<dbReference type="CCDS" id="CCDS55981.1">
    <molecule id="O15553-3"/>
</dbReference>
<dbReference type="RefSeq" id="NP_000234.1">
    <molecule id="O15553-2"/>
    <property type="nucleotide sequence ID" value="NM_000243.3"/>
</dbReference>
<dbReference type="RefSeq" id="NP_001185465.2">
    <molecule id="O15553-3"/>
    <property type="nucleotide sequence ID" value="NM_001198536.2"/>
</dbReference>
<dbReference type="PDB" id="2MPC">
    <property type="method" value="NMR"/>
    <property type="chains" value="A=1-92"/>
</dbReference>
<dbReference type="PDB" id="2WL1">
    <property type="method" value="X-ray"/>
    <property type="resolution" value="1.35 A"/>
    <property type="chains" value="A=586-776"/>
</dbReference>
<dbReference type="PDB" id="4CG4">
    <property type="method" value="X-ray"/>
    <property type="resolution" value="2.40 A"/>
    <property type="chains" value="A/B/C/D/E/F=414-781"/>
</dbReference>
<dbReference type="PDB" id="8C28">
    <property type="method" value="X-ray"/>
    <property type="resolution" value="1.60 A"/>
    <property type="chains" value="CCC/DDD/PPP=205-248"/>
</dbReference>
<dbReference type="PDB" id="8C2Y">
    <property type="method" value="X-ray"/>
    <property type="resolution" value="1.46 A"/>
    <property type="chains" value="P=237-248"/>
</dbReference>
<dbReference type="PDB" id="8C30">
    <property type="method" value="X-ray"/>
    <property type="resolution" value="1.40 A"/>
    <property type="chains" value="PPP=237-248"/>
</dbReference>
<dbReference type="PDB" id="8SDJ">
    <property type="method" value="X-ray"/>
    <property type="resolution" value="2.40 A"/>
    <property type="chains" value="A/B/C/D=414-520"/>
</dbReference>
<dbReference type="PDBsum" id="2MPC"/>
<dbReference type="PDBsum" id="2WL1"/>
<dbReference type="PDBsum" id="4CG4"/>
<dbReference type="PDBsum" id="8C28"/>
<dbReference type="PDBsum" id="8C2Y"/>
<dbReference type="PDBsum" id="8C30"/>
<dbReference type="PDBsum" id="8SDJ"/>
<dbReference type="SMR" id="O15553"/>
<dbReference type="BioGRID" id="110374">
    <property type="interactions" value="19"/>
</dbReference>
<dbReference type="ComplexPortal" id="CPX-4143">
    <property type="entry name" value="Pyrin inflammasome"/>
</dbReference>
<dbReference type="CORUM" id="O15553"/>
<dbReference type="DIP" id="DIP-41878N"/>
<dbReference type="FunCoup" id="O15553">
    <property type="interactions" value="251"/>
</dbReference>
<dbReference type="IntAct" id="O15553">
    <property type="interactions" value="7"/>
</dbReference>
<dbReference type="MINT" id="O15553"/>
<dbReference type="STRING" id="9606.ENSP00000219596"/>
<dbReference type="GlyCosmos" id="O15553">
    <property type="glycosylation" value="1 site, 1 glycan"/>
</dbReference>
<dbReference type="GlyGen" id="O15553">
    <property type="glycosylation" value="3 sites, 1 O-linked glycan (2 sites)"/>
</dbReference>
<dbReference type="iPTMnet" id="O15553"/>
<dbReference type="PhosphoSitePlus" id="O15553"/>
<dbReference type="BioMuta" id="MEFV"/>
<dbReference type="MassIVE" id="O15553"/>
<dbReference type="PaxDb" id="9606-ENSP00000219596"/>
<dbReference type="PeptideAtlas" id="O15553"/>
<dbReference type="ProteomicsDB" id="25411"/>
<dbReference type="ProteomicsDB" id="48755">
    <molecule id="O15553-2"/>
</dbReference>
<dbReference type="ProteomicsDB" id="48756">
    <molecule id="O15553-1"/>
</dbReference>
<dbReference type="Antibodypedia" id="10781">
    <property type="antibodies" value="214 antibodies from 32 providers"/>
</dbReference>
<dbReference type="DNASU" id="4210"/>
<dbReference type="Ensembl" id="ENST00000219596.6">
    <molecule id="O15553-2"/>
    <property type="protein sequence ID" value="ENSP00000219596.1"/>
    <property type="gene ID" value="ENSG00000103313.14"/>
</dbReference>
<dbReference type="Ensembl" id="ENST00000536379.5">
    <molecule id="O15553-1"/>
    <property type="protein sequence ID" value="ENSP00000445079.1"/>
    <property type="gene ID" value="ENSG00000103313.14"/>
</dbReference>
<dbReference type="Ensembl" id="ENST00000541159.5">
    <molecule id="O15553-3"/>
    <property type="protein sequence ID" value="ENSP00000438711.1"/>
    <property type="gene ID" value="ENSG00000103313.14"/>
</dbReference>
<dbReference type="GeneID" id="4210"/>
<dbReference type="KEGG" id="hsa:4210"/>
<dbReference type="MANE-Select" id="ENST00000219596.6">
    <property type="protein sequence ID" value="ENSP00000219596.1"/>
    <property type="RefSeq nucleotide sequence ID" value="NM_000243.3"/>
    <property type="RefSeq protein sequence ID" value="NP_000234.1"/>
</dbReference>
<dbReference type="UCSC" id="uc002cun.1">
    <molecule id="O15553-2"/>
    <property type="organism name" value="human"/>
</dbReference>
<dbReference type="AGR" id="HGNC:6998"/>
<dbReference type="CTD" id="4210"/>
<dbReference type="DisGeNET" id="4210"/>
<dbReference type="GeneCards" id="MEFV"/>
<dbReference type="GeneReviews" id="MEFV"/>
<dbReference type="HGNC" id="HGNC:6998">
    <property type="gene designation" value="MEFV"/>
</dbReference>
<dbReference type="HPA" id="ENSG00000103313">
    <property type="expression patterns" value="Tissue enhanced (bone marrow, lung, lymphoid tissue)"/>
</dbReference>
<dbReference type="MalaCards" id="MEFV"/>
<dbReference type="MIM" id="134610">
    <property type="type" value="phenotype"/>
</dbReference>
<dbReference type="MIM" id="249100">
    <property type="type" value="phenotype"/>
</dbReference>
<dbReference type="MIM" id="608068">
    <property type="type" value="phenotype"/>
</dbReference>
<dbReference type="MIM" id="608107">
    <property type="type" value="gene"/>
</dbReference>
<dbReference type="neXtProt" id="NX_O15553"/>
<dbReference type="OpenTargets" id="ENSG00000103313"/>
<dbReference type="Orphanet" id="117">
    <property type="disease" value="Behcet disease"/>
</dbReference>
<dbReference type="Orphanet" id="342">
    <property type="disease" value="Familial Mediterranean fever"/>
</dbReference>
<dbReference type="Orphanet" id="329967">
    <property type="disease" value="Intermittent hydrarthrosis"/>
</dbReference>
<dbReference type="Orphanet" id="3243">
    <property type="disease" value="Sweet syndrome"/>
</dbReference>
<dbReference type="PharmGKB" id="PA30736"/>
<dbReference type="VEuPathDB" id="HostDB:ENSG00000103313"/>
<dbReference type="eggNOG" id="KOG2177">
    <property type="taxonomic scope" value="Eukaryota"/>
</dbReference>
<dbReference type="GeneTree" id="ENSGT00940000161955"/>
<dbReference type="HOGENOM" id="CLU_685051_0_0_1"/>
<dbReference type="InParanoid" id="O15553"/>
<dbReference type="OMA" id="CQRHMKQ"/>
<dbReference type="OrthoDB" id="9445371at2759"/>
<dbReference type="PAN-GO" id="O15553">
    <property type="GO annotations" value="7 GO annotations based on evolutionary models"/>
</dbReference>
<dbReference type="PhylomeDB" id="O15553"/>
<dbReference type="TreeFam" id="TF351091"/>
<dbReference type="PathwayCommons" id="O15553"/>
<dbReference type="Reactome" id="R-HSA-844456">
    <property type="pathway name" value="The NLRP3 inflammasome"/>
</dbReference>
<dbReference type="Reactome" id="R-HSA-9660826">
    <property type="pathway name" value="Purinergic signaling in leishmaniasis infection"/>
</dbReference>
<dbReference type="SignaLink" id="O15553"/>
<dbReference type="SIGNOR" id="O15553"/>
<dbReference type="BioGRID-ORCS" id="4210">
    <property type="hits" value="21 hits in 1147 CRISPR screens"/>
</dbReference>
<dbReference type="ChiTaRS" id="MEFV">
    <property type="organism name" value="human"/>
</dbReference>
<dbReference type="EvolutionaryTrace" id="O15553"/>
<dbReference type="GeneWiki" id="MEFV"/>
<dbReference type="GenomeRNAi" id="4210"/>
<dbReference type="Pharos" id="O15553">
    <property type="development level" value="Tbio"/>
</dbReference>
<dbReference type="PRO" id="PR:O15553"/>
<dbReference type="Proteomes" id="UP000005640">
    <property type="component" value="Chromosome 16"/>
</dbReference>
<dbReference type="RNAct" id="O15553">
    <property type="molecule type" value="protein"/>
</dbReference>
<dbReference type="Bgee" id="ENSG00000103313">
    <property type="expression patterns" value="Expressed in buccal mucosa cell and 105 other cell types or tissues"/>
</dbReference>
<dbReference type="ExpressionAtlas" id="O15553">
    <property type="expression patterns" value="baseline and differential"/>
</dbReference>
<dbReference type="GO" id="GO:0005776">
    <property type="term" value="C:autophagosome"/>
    <property type="evidence" value="ECO:0007669"/>
    <property type="project" value="UniProtKB-SubCell"/>
</dbReference>
<dbReference type="GO" id="GO:0061702">
    <property type="term" value="C:canonical inflammasome complex"/>
    <property type="evidence" value="ECO:0000353"/>
    <property type="project" value="ComplexPortal"/>
</dbReference>
<dbReference type="GO" id="GO:0005737">
    <property type="term" value="C:cytoplasm"/>
    <property type="evidence" value="ECO:0000314"/>
    <property type="project" value="UniProtKB"/>
</dbReference>
<dbReference type="GO" id="GO:0031410">
    <property type="term" value="C:cytoplasmic vesicle"/>
    <property type="evidence" value="ECO:0007669"/>
    <property type="project" value="UniProtKB-KW"/>
</dbReference>
<dbReference type="GO" id="GO:0005829">
    <property type="term" value="C:cytosol"/>
    <property type="evidence" value="ECO:0000318"/>
    <property type="project" value="GO_Central"/>
</dbReference>
<dbReference type="GO" id="GO:0030027">
    <property type="term" value="C:lamellipodium"/>
    <property type="evidence" value="ECO:0007669"/>
    <property type="project" value="UniProtKB-SubCell"/>
</dbReference>
<dbReference type="GO" id="GO:0005874">
    <property type="term" value="C:microtubule"/>
    <property type="evidence" value="ECO:0000303"/>
    <property type="project" value="ComplexPortal"/>
</dbReference>
<dbReference type="GO" id="GO:0005875">
    <property type="term" value="C:microtubule associated complex"/>
    <property type="evidence" value="ECO:0000314"/>
    <property type="project" value="UniProtKB"/>
</dbReference>
<dbReference type="GO" id="GO:0005654">
    <property type="term" value="C:nucleoplasm"/>
    <property type="evidence" value="ECO:0000318"/>
    <property type="project" value="GO_Central"/>
</dbReference>
<dbReference type="GO" id="GO:0005634">
    <property type="term" value="C:nucleus"/>
    <property type="evidence" value="ECO:0000314"/>
    <property type="project" value="UniProtKB"/>
</dbReference>
<dbReference type="GO" id="GO:0005886">
    <property type="term" value="C:plasma membrane"/>
    <property type="evidence" value="ECO:0000314"/>
    <property type="project" value="HPA"/>
</dbReference>
<dbReference type="GO" id="GO:0001726">
    <property type="term" value="C:ruffle"/>
    <property type="evidence" value="ECO:0007669"/>
    <property type="project" value="UniProtKB-SubCell"/>
</dbReference>
<dbReference type="GO" id="GO:0003779">
    <property type="term" value="F:actin binding"/>
    <property type="evidence" value="ECO:0000314"/>
    <property type="project" value="UniProtKB"/>
</dbReference>
<dbReference type="GO" id="GO:0042802">
    <property type="term" value="F:identical protein binding"/>
    <property type="evidence" value="ECO:0000353"/>
    <property type="project" value="IntAct"/>
</dbReference>
<dbReference type="GO" id="GO:0061630">
    <property type="term" value="F:ubiquitin protein ligase activity"/>
    <property type="evidence" value="ECO:0000318"/>
    <property type="project" value="GO_Central"/>
</dbReference>
<dbReference type="GO" id="GO:0008270">
    <property type="term" value="F:zinc ion binding"/>
    <property type="evidence" value="ECO:0000303"/>
    <property type="project" value="UniProtKB"/>
</dbReference>
<dbReference type="GO" id="GO:0006954">
    <property type="term" value="P:inflammatory response"/>
    <property type="evidence" value="ECO:0000314"/>
    <property type="project" value="UniProtKB"/>
</dbReference>
<dbReference type="GO" id="GO:0045087">
    <property type="term" value="P:innate immune response"/>
    <property type="evidence" value="ECO:0000318"/>
    <property type="project" value="GO_Central"/>
</dbReference>
<dbReference type="GO" id="GO:1900016">
    <property type="term" value="P:negative regulation of cytokine production involved in inflammatory response"/>
    <property type="evidence" value="ECO:0000315"/>
    <property type="project" value="UniProtKB"/>
</dbReference>
<dbReference type="GO" id="GO:0050728">
    <property type="term" value="P:negative regulation of inflammatory response"/>
    <property type="evidence" value="ECO:0000315"/>
    <property type="project" value="BHF-UCL"/>
</dbReference>
<dbReference type="GO" id="GO:0032691">
    <property type="term" value="P:negative regulation of interleukin-1 beta production"/>
    <property type="evidence" value="ECO:0000315"/>
    <property type="project" value="BHF-UCL"/>
</dbReference>
<dbReference type="GO" id="GO:0032695">
    <property type="term" value="P:negative regulation of interleukin-12 production"/>
    <property type="evidence" value="ECO:0000315"/>
    <property type="project" value="BHF-UCL"/>
</dbReference>
<dbReference type="GO" id="GO:0071641">
    <property type="term" value="P:negative regulation of macrophage inflammatory protein 1 alpha production"/>
    <property type="evidence" value="ECO:0000315"/>
    <property type="project" value="BHF-UCL"/>
</dbReference>
<dbReference type="GO" id="GO:1900226">
    <property type="term" value="P:negative regulation of NLRP3 inflammasome complex assembly"/>
    <property type="evidence" value="ECO:0000315"/>
    <property type="project" value="UniProtKB"/>
</dbReference>
<dbReference type="GO" id="GO:0002221">
    <property type="term" value="P:pattern recognition receptor signaling pathway"/>
    <property type="evidence" value="ECO:0000303"/>
    <property type="project" value="ComplexPortal"/>
</dbReference>
<dbReference type="GO" id="GO:0010508">
    <property type="term" value="P:positive regulation of autophagy"/>
    <property type="evidence" value="ECO:0000314"/>
    <property type="project" value="UniProtKB"/>
</dbReference>
<dbReference type="GO" id="GO:0050729">
    <property type="term" value="P:positive regulation of inflammatory response"/>
    <property type="evidence" value="ECO:0000266"/>
    <property type="project" value="ComplexPortal"/>
</dbReference>
<dbReference type="GO" id="GO:0032731">
    <property type="term" value="P:positive regulation of interleukin-1 beta production"/>
    <property type="evidence" value="ECO:0000314"/>
    <property type="project" value="ComplexPortal"/>
</dbReference>
<dbReference type="GO" id="GO:1904270">
    <property type="term" value="P:pyroptosome complex assembly"/>
    <property type="evidence" value="ECO:0000314"/>
    <property type="project" value="UniProtKB"/>
</dbReference>
<dbReference type="GO" id="GO:0070269">
    <property type="term" value="P:pyroptotic inflammatory response"/>
    <property type="evidence" value="ECO:0000303"/>
    <property type="project" value="ComplexPortal"/>
</dbReference>
<dbReference type="GO" id="GO:0010468">
    <property type="term" value="P:regulation of gene expression"/>
    <property type="evidence" value="ECO:0000318"/>
    <property type="project" value="GO_Central"/>
</dbReference>
<dbReference type="GO" id="GO:0032651">
    <property type="term" value="P:regulation of interleukin-1 beta production"/>
    <property type="evidence" value="ECO:0000315"/>
    <property type="project" value="UniProtKB"/>
</dbReference>
<dbReference type="GO" id="GO:0034341">
    <property type="term" value="P:response to type II interferon"/>
    <property type="evidence" value="ECO:0000314"/>
    <property type="project" value="UniProtKB"/>
</dbReference>
<dbReference type="CDD" id="cd19771">
    <property type="entry name" value="Bbox2_TRIM20"/>
    <property type="match status" value="1"/>
</dbReference>
<dbReference type="CDD" id="cd08321">
    <property type="entry name" value="Pyrin_ASC-like"/>
    <property type="match status" value="1"/>
</dbReference>
<dbReference type="CDD" id="cd15813">
    <property type="entry name" value="SPRY_PRY_TRIM20"/>
    <property type="match status" value="1"/>
</dbReference>
<dbReference type="FunFam" id="2.60.120.920:FF:000004">
    <property type="entry name" value="Butyrophilin subfamily 1 member A1"/>
    <property type="match status" value="1"/>
</dbReference>
<dbReference type="FunFam" id="1.10.533.10:FF:000048">
    <property type="entry name" value="MEFV, pyrin innate immunity regulator"/>
    <property type="match status" value="1"/>
</dbReference>
<dbReference type="FunFam" id="3.30.160.60:FF:001023">
    <property type="entry name" value="MEFV, pyrin innate immunity regulator"/>
    <property type="match status" value="1"/>
</dbReference>
<dbReference type="Gene3D" id="2.60.120.920">
    <property type="match status" value="1"/>
</dbReference>
<dbReference type="Gene3D" id="3.30.160.60">
    <property type="entry name" value="Classic Zinc Finger"/>
    <property type="match status" value="1"/>
</dbReference>
<dbReference type="Gene3D" id="1.10.533.10">
    <property type="entry name" value="Death Domain, Fas"/>
    <property type="match status" value="1"/>
</dbReference>
<dbReference type="InterPro" id="IPR001870">
    <property type="entry name" value="B30.2/SPRY"/>
</dbReference>
<dbReference type="InterPro" id="IPR043136">
    <property type="entry name" value="B30.2/SPRY_sf"/>
</dbReference>
<dbReference type="InterPro" id="IPR003879">
    <property type="entry name" value="Butyrophylin_SPRY"/>
</dbReference>
<dbReference type="InterPro" id="IPR013320">
    <property type="entry name" value="ConA-like_dom_sf"/>
</dbReference>
<dbReference type="InterPro" id="IPR004020">
    <property type="entry name" value="DAPIN"/>
</dbReference>
<dbReference type="InterPro" id="IPR011029">
    <property type="entry name" value="DEATH-like_dom_sf"/>
</dbReference>
<dbReference type="InterPro" id="IPR006574">
    <property type="entry name" value="PRY"/>
</dbReference>
<dbReference type="InterPro" id="IPR003877">
    <property type="entry name" value="SPRY_dom"/>
</dbReference>
<dbReference type="InterPro" id="IPR050143">
    <property type="entry name" value="TRIM/RBCC"/>
</dbReference>
<dbReference type="InterPro" id="IPR000315">
    <property type="entry name" value="Znf_B-box"/>
</dbReference>
<dbReference type="PANTHER" id="PTHR24103">
    <property type="entry name" value="E3 UBIQUITIN-PROTEIN LIGASE TRIM"/>
    <property type="match status" value="1"/>
</dbReference>
<dbReference type="Pfam" id="PF13765">
    <property type="entry name" value="PRY"/>
    <property type="match status" value="1"/>
</dbReference>
<dbReference type="Pfam" id="PF02758">
    <property type="entry name" value="PYRIN"/>
    <property type="match status" value="1"/>
</dbReference>
<dbReference type="Pfam" id="PF00622">
    <property type="entry name" value="SPRY"/>
    <property type="match status" value="1"/>
</dbReference>
<dbReference type="Pfam" id="PF00643">
    <property type="entry name" value="zf-B_box"/>
    <property type="match status" value="1"/>
</dbReference>
<dbReference type="PRINTS" id="PR01407">
    <property type="entry name" value="BUTYPHLNCDUF"/>
</dbReference>
<dbReference type="SMART" id="SM00336">
    <property type="entry name" value="BBOX"/>
    <property type="match status" value="1"/>
</dbReference>
<dbReference type="SMART" id="SM00589">
    <property type="entry name" value="PRY"/>
    <property type="match status" value="1"/>
</dbReference>
<dbReference type="SMART" id="SM01289">
    <property type="entry name" value="PYRIN"/>
    <property type="match status" value="1"/>
</dbReference>
<dbReference type="SMART" id="SM00449">
    <property type="entry name" value="SPRY"/>
    <property type="match status" value="1"/>
</dbReference>
<dbReference type="SUPFAM" id="SSF57845">
    <property type="entry name" value="B-box zinc-binding domain"/>
    <property type="match status" value="1"/>
</dbReference>
<dbReference type="SUPFAM" id="SSF49899">
    <property type="entry name" value="Concanavalin A-like lectins/glucanases"/>
    <property type="match status" value="1"/>
</dbReference>
<dbReference type="SUPFAM" id="SSF47986">
    <property type="entry name" value="DEATH domain"/>
    <property type="match status" value="1"/>
</dbReference>
<dbReference type="PROSITE" id="PS50188">
    <property type="entry name" value="B302_SPRY"/>
    <property type="match status" value="1"/>
</dbReference>
<dbReference type="PROSITE" id="PS50824">
    <property type="entry name" value="DAPIN"/>
    <property type="match status" value="1"/>
</dbReference>
<dbReference type="PROSITE" id="PS50119">
    <property type="entry name" value="ZF_BBOX"/>
    <property type="match status" value="1"/>
</dbReference>
<feature type="chain" id="PRO_0000220364" description="Pyrin">
    <location>
        <begin position="1"/>
        <end position="781"/>
    </location>
</feature>
<feature type="domain" description="Pyrin" evidence="4">
    <location>
        <begin position="1"/>
        <end position="92"/>
    </location>
</feature>
<feature type="domain" description="B30.2/SPRY" evidence="5">
    <location>
        <begin position="580"/>
        <end position="775"/>
    </location>
</feature>
<feature type="zinc finger region" description="B box-type" evidence="3">
    <location>
        <begin position="370"/>
        <end position="412"/>
    </location>
</feature>
<feature type="region of interest" description="Disordered" evidence="6">
    <location>
        <begin position="93"/>
        <end position="226"/>
    </location>
</feature>
<feature type="region of interest" description="Interaction with RELA" evidence="34">
    <location>
        <begin position="266"/>
        <end position="280"/>
    </location>
</feature>
<feature type="region of interest" description="Disordered" evidence="6">
    <location>
        <begin position="270"/>
        <end position="322"/>
    </location>
</feature>
<feature type="region of interest" description="Disordered" evidence="6">
    <location>
        <begin position="336"/>
        <end position="373"/>
    </location>
</feature>
<feature type="region of interest" description="Required for homotrimerization and induction of pyroptosomes" evidence="33">
    <location>
        <begin position="420"/>
        <end position="582"/>
    </location>
</feature>
<feature type="coiled-coil region" evidence="2">
    <location>
        <begin position="413"/>
        <end position="442"/>
    </location>
</feature>
<feature type="short sequence motif" description="Nuclear localization signal" evidence="2">
    <location>
        <begin position="420"/>
        <end position="437"/>
    </location>
</feature>
<feature type="compositionally biased region" description="Polar residues" evidence="6">
    <location>
        <begin position="93"/>
        <end position="111"/>
    </location>
</feature>
<feature type="compositionally biased region" description="Basic and acidic residues" evidence="6">
    <location>
        <begin position="113"/>
        <end position="126"/>
    </location>
</feature>
<feature type="compositionally biased region" description="Basic residues" evidence="6">
    <location>
        <begin position="153"/>
        <end position="163"/>
    </location>
</feature>
<feature type="site" description="Cleavage; by CASP1" evidence="49">
    <location>
        <begin position="330"/>
        <end position="331"/>
    </location>
</feature>
<feature type="modified residue" description="Phosphoserine" evidence="41">
    <location>
        <position position="242"/>
    </location>
</feature>
<feature type="splice variant" id="VSP_008223" description="In isoform 2 and isoform 3." evidence="49">
    <location>
        <begin position="93"/>
        <end position="303"/>
    </location>
</feature>
<feature type="splice variant" id="VSP_047663" description="In isoform 3." evidence="49">
    <original>VPELIGAQAHAVNVILDAETAYPNLIFSDDLKSVRLGNKWERLPDGPQRFDSCIIVLGSPSFLSGRRYWEVEVGDKTAWILGACKTSISRKGNMTLSPENGYWVVIMMKENEYQASSVPPTRLLIKEPPKRVGIFVDYRVGSISFYNVTARSHIYTFASCSFSGPLQPIFSPGTRDGGKNTAPLTICPVGGQGPD</original>
    <variation>DHSPQHGLGSWEERDYTQHSMQGPKQGVPCLSLLSGQCNLAPLNANAQDFFPYLIFLRSSGADWRSGTCC</variation>
    <location>
        <begin position="587"/>
        <end position="781"/>
    </location>
</feature>
<feature type="sequence variant" id="VAR_048398" description="In dbSNP:rs11466016.">
    <original>V</original>
    <variation>L</variation>
    <location>
        <position position="33"/>
    </location>
</feature>
<feature type="sequence variant" id="VAR_028326" description="In ARFMF; dbSNP:rs61754767." evidence="19">
    <original>R</original>
    <variation>W</variation>
    <location>
        <position position="42"/>
    </location>
</feature>
<feature type="sequence variant" id="VAR_028327" description="In ARFMF; dbSNP:rs104895103." evidence="29">
    <original>S</original>
    <variation>R</variation>
    <location>
        <position position="108"/>
    </location>
</feature>
<feature type="sequence variant" id="VAR_016824" description="In ARFMF; dbSNP:rs11466018." evidence="17 39">
    <original>L</original>
    <variation>P</variation>
    <location>
        <position position="110"/>
    </location>
</feature>
<feature type="sequence variant" id="VAR_009051" description="In ARFMF and ADFMF; likely benign; dbSNP:rs3743930." evidence="10 11 13 14 17 29 39">
    <original>E</original>
    <variation>Q</variation>
    <location>
        <position position="148"/>
    </location>
</feature>
<feature type="sequence variant" id="VAR_028328" description="In ARFMF; dbSNP:rs104895076." evidence="29">
    <original>E</original>
    <variation>V</variation>
    <location>
        <position position="148"/>
    </location>
</feature>
<feature type="sequence variant" id="VAR_028329" description="In ARFMF; dbSNP:rs104895106." evidence="26">
    <original>E</original>
    <variation>A</variation>
    <location>
        <position position="163"/>
    </location>
</feature>
<feature type="sequence variant" id="VAR_009052" description="In ARFMF; dbSNP:rs104895079." evidence="29">
    <original>E</original>
    <variation>D</variation>
    <location>
        <position position="167"/>
    </location>
</feature>
<feature type="sequence variant" id="VAR_028330" description="In ARFMF; dbSNP:rs104895143." evidence="29">
    <original>T</original>
    <variation>I</variation>
    <location>
        <position position="177"/>
    </location>
</feature>
<feature type="sequence variant" id="VAR_072382" description="In ARFMF; uncertain significance; dbSNP:rs104895179." evidence="39">
    <original>G</original>
    <variation>W</variation>
    <location>
        <position position="196"/>
    </location>
</feature>
<feature type="sequence variant" id="VAR_009053" description="Benign; no effect on PYCARD/ASC inflammasome formation; dbSNP:rs224222." evidence="27 39 41 45">
    <original>R</original>
    <variation>Q</variation>
    <location>
        <position position="202"/>
    </location>
</feature>
<feature type="sequence variant" id="VAR_016826" description="In ARFMF; dbSNP:rs104895080." evidence="21 39">
    <original>E</original>
    <variation>K</variation>
    <location>
        <position position="230"/>
    </location>
</feature>
<feature type="sequence variant" id="VAR_084466" description="In PAAND; results in constitutive inflammasome activation; increased PYCARD/ASC specks formation; increased caspase-1 activation and IL1B production; loss of S-242 phosphorylation; loss of interaction with 14-3-3 proteins; dbSNP:rs104895127." evidence="41">
    <original>S</original>
    <variation>R</variation>
    <location>
        <position position="242"/>
    </location>
</feature>
<feature type="sequence variant" id="VAR_084467" description="In PAAND; results in constitutive inflammasome activation; increased PYCARD/ASC specks formation; increased caspase-1 activation and IL1B and IL18 production; decreased interaction with 14-3-3 proteins; no effect on interaction with PSTPIP1; dbSNP:rs1959081392." evidence="42">
    <original>E</original>
    <variation>K</variation>
    <location>
        <position position="244"/>
    </location>
</feature>
<feature type="sequence variant" id="VAR_072383" description="In ARFMF; uncertain significance; dbSNP:rs1472692347." evidence="39">
    <original>I</original>
    <variation>V</variation>
    <location>
        <position position="247"/>
    </location>
</feature>
<feature type="sequence variant" id="VAR_009054" description="In ARFMF; dbSNP:rs104895081." evidence="29 38">
    <original>T</original>
    <variation>I</variation>
    <location>
        <position position="267"/>
    </location>
</feature>
<feature type="sequence variant" id="VAR_072384" description="In ARFMF; uncertain significance; dbSNP:rs104895119." evidence="39">
    <original>P</original>
    <variation>L</variation>
    <location>
        <position position="283"/>
    </location>
</feature>
<feature type="sequence variant" id="VAR_072385" description="In ARFMF; uncertain significance; no effect on PYCARD/ASC inflammasome formation; dbSNP:rs75977701." evidence="39 41">
    <original>G</original>
    <variation>R</variation>
    <location>
        <position position="304"/>
    </location>
</feature>
<feature type="sequence variant" id="VAR_028331" description="In ARFMF; dbSNP:rs104895110." evidence="26">
    <original>E</original>
    <variation>K</variation>
    <location>
        <position position="319"/>
    </location>
</feature>
<feature type="sequence variant" id="VAR_009055" description="In ARFMF; uncertain significance; dbSNP:rs11466023." evidence="10 38">
    <original>P</original>
    <variation>S</variation>
    <location>
        <position position="369"/>
    </location>
</feature>
<feature type="sequence variant" id="VAR_009056" description="In ARFMF; uncertain significance; dbSNP:rs11466024." evidence="10 38">
    <original>R</original>
    <variation>Q</variation>
    <location>
        <position position="408"/>
    </location>
</feature>
<feature type="sequence variant" id="VAR_024376" description="In dbSNP:rs11466026.">
    <original>Q</original>
    <variation>E</variation>
    <location>
        <position position="440"/>
    </location>
</feature>
<feature type="sequence variant" id="VAR_028332" description="In ARFMF; dbSNP:rs104895104." evidence="29">
    <original>E</original>
    <variation>K</variation>
    <location>
        <position position="474"/>
    </location>
</feature>
<feature type="sequence variant" id="VAR_028333" description="In ADFMF; severe; dbSNP:rs104895105." evidence="25">
    <original>H</original>
    <variation>Y</variation>
    <location>
        <position position="478"/>
    </location>
</feature>
<feature type="sequence variant" id="VAR_009057" description="In ARFMF; dbSNP:rs104895083." evidence="10 29">
    <original>F</original>
    <variation>L</variation>
    <location>
        <position position="479"/>
    </location>
</feature>
<feature type="sequence variant" id="VAR_070795" description="Found in an autosomal dominant autoinflammatory disease with some similarities to familial Mediterranean fever; likely pathogenic." evidence="38">
    <original>T</original>
    <variation>A</variation>
    <location>
        <position position="577"/>
    </location>
</feature>
<feature type="sequence variant" id="VAR_070796" description="Found in an autosomal dominant autoinflammatory disease with some similarities to familial Mediterranean fever; likely pathogenic; dbSNP:rs1057516210." evidence="38">
    <original>T</original>
    <variation>N</variation>
    <location>
        <position position="577"/>
    </location>
</feature>
<feature type="sequence variant" id="VAR_070797" description="Found in an autosomal dominant autoinflammatory disease with some similarities to familial Mediterranean fever; likely pathogenic; dbSNP:rs104895193." evidence="38">
    <original>T</original>
    <variation>S</variation>
    <location>
        <position position="577"/>
    </location>
</feature>
<feature type="sequence variant" id="VAR_028334" description="In dbSNP:rs11466043.">
    <original>F</original>
    <variation>L</variation>
    <location>
        <position position="585"/>
    </location>
</feature>
<feature type="sequence variant" id="VAR_016827" description="In ARFMF; likely benign; dbSNP:rs11466045." evidence="23">
    <original>I</original>
    <variation>T</variation>
    <location>
        <position position="591"/>
    </location>
</feature>
<feature type="sequence variant" id="VAR_072386" description="In ARFMF; uncertain significance; dbSNP:rs967990798." evidence="39">
    <original>G</original>
    <variation>A</variation>
    <location>
        <position position="632"/>
    </location>
</feature>
<feature type="sequence variant" id="VAR_028335" description="In ARFMF; dbSNP:rs104895128." evidence="30">
    <original>G</original>
    <variation>S</variation>
    <location>
        <position position="632"/>
    </location>
</feature>
<feature type="sequence variant" id="VAR_028336" description="In ARFMF; dbSNP:rs104895115." evidence="30">
    <original>I</original>
    <variation>M</variation>
    <location>
        <position position="640"/>
    </location>
</feature>
<feature type="sequence variant" id="VAR_028337" description="In ARFMF; dbSNP:rs104895147." evidence="30">
    <original>I</original>
    <variation>F</variation>
    <location>
        <position position="641"/>
    </location>
</feature>
<feature type="sequence variant" id="VAR_028338" description="In ARFMF; dbSNP:rs104895107." evidence="30">
    <original>P</original>
    <variation>L</variation>
    <location>
        <position position="646"/>
    </location>
</feature>
<feature type="sequence variant" id="VAR_028339" description="In ARFMF; dbSNP:rs104895108." evidence="30">
    <original>L</original>
    <variation>P</variation>
    <location>
        <position position="649"/>
    </location>
</feature>
<feature type="sequence variant" id="VAR_016828" description="In ARFMF; dbSNP:rs104895085." evidence="21 29 30">
    <original>R</original>
    <variation>H</variation>
    <location>
        <position position="653"/>
    </location>
</feature>
<feature type="sequence variant" id="VAR_028340" description="In ARFMF; dbSNP:rs104895086." evidence="30">
    <original>E</original>
    <variation>A</variation>
    <location>
        <position position="656"/>
    </location>
</feature>
<feature type="sequence variant" id="VAR_028341" description="In ARFMF; dbSNP:rs104895120." evidence="30">
    <original>D</original>
    <variation>N</variation>
    <location>
        <position position="661"/>
    </location>
</feature>
<feature type="sequence variant" id="VAR_016829" description="In ARFMF; dbSNP:rs104895087." evidence="16 30">
    <original>S</original>
    <variation>N</variation>
    <location>
        <position position="675"/>
    </location>
</feature>
<feature type="sequence variant" id="VAR_028342" description="In ARFMF; dbSNP:rs104895088." evidence="30">
    <original>G</original>
    <variation>E</variation>
    <location>
        <position position="678"/>
    </location>
</feature>
<feature type="sequence variant" id="VAR_028343" description="In ARFMF and ADFMF; reduced CASP1 interaction; results in decreased interaction with ULK1 and diminished NLRP3 degradation after induction of autophagy by starvation when associated in cis with V-694 (PubMed:26347139); no effect on PYCARD/ASC inflammasome formation; no effect on interaction with 14-3-3 proteins; dbSNP:rs28940580." evidence="7 9 10 11 14 29 31 39 40 41 43 44">
    <original>M</original>
    <variation>I</variation>
    <location>
        <position position="680"/>
    </location>
</feature>
<feature type="sequence variant" id="VAR_016830" description="In ARFMF; dbSNP:rs104895089." evidence="16 30">
    <original>M</original>
    <variation>L</variation>
    <location>
        <position position="680"/>
    </location>
</feature>
<feature type="sequence variant" id="VAR_009059" description="In ARFMF; dbSNP:rs104895090." evidence="7 30">
    <original>T</original>
    <variation>I</variation>
    <location>
        <position position="681"/>
    </location>
</feature>
<feature type="sequence variant" id="VAR_028344" description="In ARFMF; dbSNP:rs104895122." evidence="30">
    <original>Y</original>
    <variation>C</variation>
    <location>
        <position position="688"/>
    </location>
</feature>
<feature type="sequence variant" id="VAR_009060" description="In ARFMF; dbSNP:rs104895093." evidence="16">
    <location>
        <position position="692"/>
    </location>
</feature>
<feature type="sequence variant" id="VAR_009061" description="In ARFMF and ADFMF; no effect on PYCARD/ASC inflammasome formation; no effect on interaction with 14-3-3 proteins; dbSNP:rs28940578." evidence="7 9 11 14 29 30 39 41 43">
    <original>M</original>
    <variation>I</variation>
    <location>
        <position position="694"/>
    </location>
</feature>
<feature type="sequence variant" id="VAR_070798" description="In ARFMF; dbSNP:rs1596350022." evidence="37">
    <original>M</original>
    <variation>K</variation>
    <location>
        <position position="694"/>
    </location>
</feature>
<feature type="sequence variant" id="VAR_028345" description="In ARFMF; dbSNP:rs61752717." evidence="30">
    <original>M</original>
    <variation>L</variation>
    <location>
        <position position="694"/>
    </location>
</feature>
<feature type="sequence variant" id="VAR_009062" description="In ARFMF and ADFMF; very common mutation particularly in North African Jews; probable risk factor for amyloidosis development; reduced interaction with CASP1 and with ULK1 and diminished NLRP3 degradation after induction of autophagy by starvation (PubMed:16785446) (PubMed:26347139); effect on autophagic NLRP3 degradation is increased when associated in cis with I-680; no effect on interaction with CASP1, CASP5, NLRP1, NLRP2 or NLRP3 (PubMed:17431422); dbSNP:rs61752717." evidence="7 9 10 11 14 17 29 30 31 32 39 40 44">
    <original>M</original>
    <variation>V</variation>
    <location>
        <position position="694"/>
    </location>
</feature>
<feature type="sequence variant" id="VAR_009063" description="In ARFMF and ADFMF." evidence="7 14">
    <location>
        <position position="694"/>
    </location>
</feature>
<feature type="sequence variant" id="VAR_028346" description="In ARFMF; dbSNP:rs104895094." evidence="30">
    <original>K</original>
    <variation>M</variation>
    <location>
        <position position="695"/>
    </location>
</feature>
<feature type="sequence variant" id="VAR_009064" description="In ARFMF; reduced penetrance among Ashkenazi Jews; dbSNP:rs104895094." evidence="11 29 30 39">
    <original>K</original>
    <variation>R</variation>
    <location>
        <position position="695"/>
    </location>
</feature>
<feature type="sequence variant" id="VAR_028347" description="In one patient with familial Mediterranean fever; dbSNP:rs104895166." evidence="30">
    <original>S</original>
    <variation>C</variation>
    <location>
        <position position="702"/>
    </location>
</feature>
<feature type="sequence variant" id="VAR_028348" description="In ARFMF; dbSNP:rs104895096." evidence="30">
    <original>V</original>
    <variation>I</variation>
    <location>
        <position position="704"/>
    </location>
</feature>
<feature type="sequence variant" id="VAR_028349" description="In ARFMF; dbSNP:rs104895145." evidence="30">
    <original>P</original>
    <variation>S</variation>
    <location>
        <position position="705"/>
    </location>
</feature>
<feature type="sequence variant" id="VAR_028350" description="In ARFMF; dbSNP:rs104895102." evidence="29 30">
    <original>I</original>
    <variation>M</variation>
    <location>
        <position position="720"/>
    </location>
</feature>
<feature type="sequence variant" id="VAR_009065" description="In ARFMF; common mutation; in Iraqi and Ashkenazi Jews, Druze, Armenians; reduced interaction with CASP1 and ULK1 and diminished NLRP3 degradation after induction of autophagy by starvation when associated in cis with I-680 and V-694; no effect on CASP1 activation; no effect on interaction with 14-3-3 proteins; dbSNP:rs28940579." evidence="7 9 10 11 29 30 31 39 41 44">
    <original>V</original>
    <variation>A</variation>
    <location>
        <position position="726"/>
    </location>
</feature>
<feature type="sequence variant" id="VAR_028351" description="In ARFMF; dbSNP:rs104895152." evidence="30">
    <original>F</original>
    <variation>L</variation>
    <location>
        <position position="743"/>
    </location>
</feature>
<feature type="sequence variant" id="VAR_009066" description="In ARFMF; uncertain significance; dbSNP:rs61732874." evidence="26 29 30 39">
    <original>A</original>
    <variation>S</variation>
    <location>
        <position position="744"/>
    </location>
</feature>
<feature type="sequence variant" id="VAR_028352" description="In ARFMF; dbSNP:rs104895114." evidence="30">
    <original>P</original>
    <variation>S</variation>
    <location>
        <position position="758"/>
    </location>
</feature>
<feature type="sequence variant" id="VAR_009067" description="In ARFMF; dbSNP:rs104895097." evidence="10 11 29 30 39">
    <original>R</original>
    <variation>H</variation>
    <location>
        <position position="761"/>
    </location>
</feature>
<feature type="sequence variant" id="VAR_028353" description="In ARFMF; dbSNP:rs104895154." evidence="30">
    <original>P</original>
    <variation>T</variation>
    <location>
        <position position="780"/>
    </location>
</feature>
<feature type="mutagenesis site" description="Does not form MEFV- and PSTPIP1-containing perinuclear specks." evidence="28">
    <original>L</original>
    <variation>P</variation>
    <location>
        <position position="16"/>
    </location>
</feature>
<feature type="mutagenesis site" description="Does not form MEFV- and PSTPIP1-containing perinuclear specks." evidence="28">
    <original>F</original>
    <variation>S</variation>
    <location>
        <position position="24"/>
    </location>
</feature>
<feature type="mutagenesis site" description="Loss of interaction with 14-3-3 proteins." evidence="42">
    <original>S</original>
    <variation>A</variation>
    <location>
        <position position="208"/>
    </location>
</feature>
<feature type="mutagenesis site" description="No effect on PYCARD/ASC specks formation. No effect on interaction with 14-3-3 proteins." evidence="42">
    <original>E</original>
    <variation>D</variation>
    <location>
        <position position="244"/>
    </location>
</feature>
<feature type="mutagenesis site" description="No effect on PYCARD/ASC specks formation. Increased interaction with 14-3-3 proteins." evidence="42">
    <original>E</original>
    <variation>P</variation>
    <location>
        <position position="244"/>
    </location>
</feature>
<feature type="mutagenesis site" description="Increased PYCARD/ASC specks formation. Decreased interaction with 14-3-3 proteins." evidence="42">
    <original>E</original>
    <variation>R</variation>
    <location>
        <position position="244"/>
    </location>
</feature>
<feature type="mutagenesis site" description="Loss of cleavage by CASP1." evidence="34">
    <original>D</original>
    <variation>A</variation>
    <location>
        <position position="330"/>
    </location>
</feature>
<feature type="mutagenesis site" description="No effect on GABARAP-binding. Loss of GABARAP-binding; when associated with 470-Y--G-488 and 523-S--D-530.">
    <location>
        <begin position="397"/>
        <end position="404"/>
    </location>
</feature>
<feature type="mutagenesis site" description="No effect on GABARAP-binding. Loss of GABARAP-binding; when associated with 397-I--H-404 and 523-S--D-530.">
    <location>
        <begin position="470"/>
        <end position="488"/>
    </location>
</feature>
<feature type="mutagenesis site" description="No effect on GABARAP-binding. Loss of GABARAP-binding; when associated with 397-I--H-404 and 470-Y--G-488.">
    <location>
        <begin position="523"/>
        <end position="530"/>
    </location>
</feature>
<feature type="helix" evidence="52">
    <location>
        <begin position="5"/>
        <end position="15"/>
    </location>
</feature>
<feature type="helix" evidence="52">
    <location>
        <begin position="18"/>
        <end position="28"/>
    </location>
</feature>
<feature type="helix" evidence="52">
    <location>
        <begin position="42"/>
        <end position="47"/>
    </location>
</feature>
<feature type="turn" evidence="52">
    <location>
        <begin position="50"/>
        <end position="52"/>
    </location>
</feature>
<feature type="helix" evidence="52">
    <location>
        <begin position="53"/>
        <end position="60"/>
    </location>
</feature>
<feature type="helix" evidence="52">
    <location>
        <begin position="63"/>
        <end position="76"/>
    </location>
</feature>
<feature type="helix" evidence="52">
    <location>
        <begin position="80"/>
        <end position="92"/>
    </location>
</feature>
<feature type="helix" evidence="54">
    <location>
        <begin position="414"/>
        <end position="519"/>
    </location>
</feature>
<feature type="helix" evidence="54">
    <location>
        <begin position="524"/>
        <end position="528"/>
    </location>
</feature>
<feature type="helix" evidence="54">
    <location>
        <begin position="531"/>
        <end position="539"/>
    </location>
</feature>
<feature type="helix" evidence="54">
    <location>
        <begin position="551"/>
        <end position="583"/>
    </location>
</feature>
<feature type="helix" evidence="54">
    <location>
        <begin position="584"/>
        <end position="586"/>
    </location>
</feature>
<feature type="helix" evidence="53">
    <location>
        <begin position="590"/>
        <end position="594"/>
    </location>
</feature>
<feature type="turn" evidence="53">
    <location>
        <begin position="604"/>
        <end position="606"/>
    </location>
</feature>
<feature type="strand" evidence="53">
    <location>
        <begin position="611"/>
        <end position="613"/>
    </location>
</feature>
<feature type="strand" evidence="53">
    <location>
        <begin position="619"/>
        <end position="622"/>
    </location>
</feature>
<feature type="strand" evidence="53">
    <location>
        <begin position="637"/>
        <end position="639"/>
    </location>
</feature>
<feature type="strand" evidence="53">
    <location>
        <begin position="642"/>
        <end position="645"/>
    </location>
</feature>
<feature type="strand" evidence="53">
    <location>
        <begin position="650"/>
        <end position="658"/>
    </location>
</feature>
<feature type="strand" evidence="53">
    <location>
        <begin position="665"/>
        <end position="671"/>
    </location>
</feature>
<feature type="strand" evidence="53">
    <location>
        <begin position="676"/>
        <end position="678"/>
    </location>
</feature>
<feature type="helix" evidence="53">
    <location>
        <begin position="684"/>
        <end position="686"/>
    </location>
</feature>
<feature type="strand" evidence="53">
    <location>
        <begin position="688"/>
        <end position="695"/>
    </location>
</feature>
<feature type="strand" evidence="53">
    <location>
        <begin position="698"/>
        <end position="701"/>
    </location>
</feature>
<feature type="strand" evidence="54">
    <location>
        <begin position="707"/>
        <end position="709"/>
    </location>
</feature>
<feature type="strand" evidence="53">
    <location>
        <begin position="716"/>
        <end position="723"/>
    </location>
</feature>
<feature type="turn" evidence="53">
    <location>
        <begin position="724"/>
        <end position="727"/>
    </location>
</feature>
<feature type="strand" evidence="53">
    <location>
        <begin position="728"/>
        <end position="733"/>
    </location>
</feature>
<feature type="turn" evidence="53">
    <location>
        <begin position="734"/>
        <end position="737"/>
    </location>
</feature>
<feature type="strand" evidence="53">
    <location>
        <begin position="738"/>
        <end position="743"/>
    </location>
</feature>
<feature type="strand" evidence="53">
    <location>
        <begin position="752"/>
        <end position="757"/>
    </location>
</feature>
<feature type="helix" evidence="53">
    <location>
        <begin position="762"/>
        <end position="764"/>
    </location>
</feature>
<feature type="strand" evidence="53">
    <location>
        <begin position="770"/>
        <end position="773"/>
    </location>
</feature>
<sequence>MAKTPSDHLLSTLEELVPYDFEKFKFKLQNTSVQKEHSRIPRSQIQRARPVKMATLLVTYYGEEYAVQLTLQVLRAINQRLLAEELHRAAIQEYSTQENGTDDSAASSSLGENKPRSLKTPDHPEGNEGNGPRPYGGGAASLRCSQPEAGRGLSRKPLSKRREKASEGLDAQGKPRTRSPALPGGRSPGPCRALEGGQAEVRLRRNASSAGRLQGLAGGAPGQKECRPFEVYLPSGKMRPRSLEVTISTGEKAPANPEILLTLEEKTAANLDSATEPRARPTPDGGASADLKEGPGNPEHSVTGRPPDTAASPRCHAQEGDPVDGTCVRDSCSFPEAVSGHPQASGSRSPGCPRCQDSHERKSPGSLSPQPLPQCKRHLKQVQLLFCEDHDEPICLICSLSQEHQGHRVRPIEEVALEHKKKIQKQLEHLKKLRKSGEEQRSYGEEKAVSFLKQTEALKQRVQRKLEQVYYFLEQQEHFFVASLEDVGQMVGQIRKAYDTRVSQDIALLDALIGELEAKECQSEWELLQDIGDILHRAKTVPVPEKWTTPQEIKQKIQLLHQKSEFVEKSTKYFSETLRSEMEMFNVPELIGAQAHAVNVILDAETAYPNLIFSDDLKSVRLGNKWERLPDGPQRFDSCIIVLGSPSFLSGRRYWEVEVGDKTAWILGACKTSISRKGNMTLSPENGYWVVIMMKENEYQASSVPPTRLLIKEPPKRVGIFVDYRVGSISFYNVTARSHIYTFASCSFSGPLQPIFSPGTRDGGKNTAPLTICPVGGQGPD</sequence>
<reference key="1">
    <citation type="journal article" date="1997" name="Cell">
        <title>Ancient missense mutations in a new member of the RoRet gene family are likely to cause familial Mediterranean fever.</title>
        <authorList>
            <person name="Aksentijevich I."/>
            <person name="Centola M."/>
            <person name="Deng Z."/>
            <person name="Sood R."/>
            <person name="Balow J.E. Jr."/>
            <person name="Wood G."/>
            <person name="Zaks N."/>
            <person name="Mansfield E."/>
            <person name="Chen X."/>
            <person name="Eisenberg S."/>
            <person name="Vedula A."/>
            <person name="Shafran N."/>
            <person name="Raben N."/>
            <person name="Pras E."/>
            <person name="Pras M."/>
            <person name="Kastner D.L."/>
            <person name="Blake T."/>
            <person name="Baxevanis A.D."/>
            <person name="Robbins C."/>
            <person name="Krizman D."/>
            <person name="Collins F.S."/>
            <person name="Liu P.P."/>
            <person name="Chen X."/>
            <person name="Shohat M."/>
            <person name="Hamon M."/>
            <person name="Kahan T."/>
            <person name="Cercek A."/>
            <person name="Rotter J.I."/>
            <person name="Fischel-Ghodsian N."/>
            <person name="Richards N."/>
            <person name="Shelton D.A."/>
            <person name="Gumucio D."/>
            <person name="Yokoyama Y."/>
            <person name="Mangelsdorf M."/>
            <person name="Orsborn A."/>
            <person name="Richards R.I."/>
            <person name="Ricke D.O."/>
            <person name="Buckingham J.M."/>
            <person name="Moyzis R.K."/>
            <person name="Deaven L.L."/>
            <person name="Doggett N.A."/>
        </authorList>
    </citation>
    <scope>NUCLEOTIDE SEQUENCE [MRNA] (ISOFORM 1)</scope>
    <scope>VARIANTS ARFMF ILE-680; VAL-694 AND ALA-726</scope>
    <source>
        <tissue>Leukocyte</tissue>
    </source>
</reference>
<reference key="2">
    <citation type="journal article" date="2000" name="Hum. Mol. Genet.">
        <title>Alternative splicing at the MEFV locus involved in familial Mediterranean fever regulates translocation of the marenostrin/pyrin protein to the nucleus.</title>
        <authorList>
            <person name="Papin S."/>
            <person name="Duquesnoy P."/>
            <person name="Cazeneuve C."/>
            <person name="Pantel J."/>
            <person name="Coppey-Moisan M."/>
            <person name="Dargemont C."/>
            <person name="Amselem S."/>
        </authorList>
    </citation>
    <scope>NUCLEOTIDE SEQUENCE (ISOFORM 2)</scope>
    <scope>TISSUE SPECIFICITY</scope>
    <scope>SUBCELLULAR LOCATION</scope>
    <source>
        <tissue>Leukocyte</tissue>
    </source>
</reference>
<reference key="3">
    <citation type="submission" date="2005-09" db="EMBL/GenBank/DDBJ databases">
        <authorList>
            <person name="Mural R.J."/>
            <person name="Istrail S."/>
            <person name="Sutton G.G."/>
            <person name="Florea L."/>
            <person name="Halpern A.L."/>
            <person name="Mobarry C.M."/>
            <person name="Lippert R."/>
            <person name="Walenz B."/>
            <person name="Shatkay H."/>
            <person name="Dew I."/>
            <person name="Miller J.R."/>
            <person name="Flanigan M.J."/>
            <person name="Edwards N.J."/>
            <person name="Bolanos R."/>
            <person name="Fasulo D."/>
            <person name="Halldorsson B.V."/>
            <person name="Hannenhalli S."/>
            <person name="Turner R."/>
            <person name="Yooseph S."/>
            <person name="Lu F."/>
            <person name="Nusskern D.R."/>
            <person name="Shue B.C."/>
            <person name="Zheng X.H."/>
            <person name="Zhong F."/>
            <person name="Delcher A.L."/>
            <person name="Huson D.H."/>
            <person name="Kravitz S.A."/>
            <person name="Mouchard L."/>
            <person name="Reinert K."/>
            <person name="Remington K.A."/>
            <person name="Clark A.G."/>
            <person name="Waterman M.S."/>
            <person name="Eichler E.E."/>
            <person name="Adams M.D."/>
            <person name="Hunkapiller M.W."/>
            <person name="Myers E.W."/>
            <person name="Venter J.C."/>
        </authorList>
    </citation>
    <scope>NUCLEOTIDE SEQUENCE [LARGE SCALE GENOMIC DNA]</scope>
</reference>
<reference key="4">
    <citation type="journal article" date="2004" name="Genome Res.">
        <title>The status, quality, and expansion of the NIH full-length cDNA project: the Mammalian Gene Collection (MGC).</title>
        <authorList>
            <consortium name="The MGC Project Team"/>
        </authorList>
    </citation>
    <scope>NUCLEOTIDE SEQUENCE [LARGE SCALE MRNA] (ISOFORM 1)</scope>
    <scope>VARIANT GLN-202</scope>
    <source>
        <tissue>Placenta</tissue>
    </source>
</reference>
<reference key="5">
    <citation type="journal article" date="1997" name="Nat. Genet.">
        <title>A candidate gene for familial Mediterranean fever.</title>
        <authorList>
            <person name="Bernot A."/>
            <person name="Clepet C."/>
            <person name="Dasilva C."/>
            <person name="Devaud C."/>
            <person name="Petit J.-L."/>
            <person name="Caloustian C."/>
            <person name="Cruaud C."/>
            <person name="Samson D."/>
            <person name="Pulcini F."/>
            <person name="Weissenbach J."/>
            <person name="Heilig R."/>
            <person name="Notanicola C."/>
            <person name="Domingo C."/>
            <person name="Rozenbaum M."/>
            <person name="Benchetrit E."/>
            <person name="Topaloglu R."/>
            <person name="Dewalle M."/>
            <person name="Dross C."/>
            <person name="Hadjari P."/>
            <person name="Dupont M."/>
            <person name="Demaille J.G."/>
            <person name="Touitou I."/>
            <person name="Smaoui N."/>
            <person name="Nedelec B."/>
            <person name="Mery J.-P."/>
            <person name="Chaabouni H."/>
            <person name="Delpech M."/>
            <person name="Grateau G."/>
        </authorList>
    </citation>
    <scope>NUCLEOTIDE SEQUENCE [MRNA] OF 305-754</scope>
    <scope>VARIANTS ARFMF ILE-680 AND ILE-694</scope>
</reference>
<reference key="6">
    <citation type="journal article" date="2001" name="Mutat. Res.">
        <title>Two novel mutations R653H and E230K in the Mediterranean fever gene associated with disease.</title>
        <authorList>
            <person name="Timmann C."/>
            <person name="Muntau B."/>
            <person name="Kuhne K."/>
            <person name="Gelhaus A."/>
            <person name="Horstmann R.D."/>
        </authorList>
    </citation>
    <scope>NUCLEOTIDE SEQUENCE [MRNA] OF 96-303 AND 599-781</scope>
    <scope>VARIANTS ARFMF LYS-230 AND HIS-653</scope>
    <source>
        <tissue>Blood</tissue>
    </source>
</reference>
<reference key="7">
    <citation type="journal article" date="2000" name="Blood">
        <title>The gene for familial Mediterranean fever, MEFV, is expressed in early leukocyte development and is regulated in response to inflammatory mediators.</title>
        <authorList>
            <person name="Centola M."/>
            <person name="Wood G."/>
            <person name="Frucht D.M."/>
            <person name="Galon J."/>
            <person name="Aringer M."/>
            <person name="Farrell C."/>
            <person name="Kingma D.W."/>
            <person name="Horwitz M.E."/>
            <person name="Mansfield E."/>
            <person name="Holland S.M."/>
            <person name="O'Shea J.J."/>
            <person name="Rosenberg H.F."/>
            <person name="Malech H.L."/>
            <person name="Kastner D.L."/>
        </authorList>
    </citation>
    <scope>FUNCTION</scope>
    <scope>TISSUE SPECIFICITY</scope>
    <scope>DEVELOPMENTAL STAGE</scope>
    <scope>INDUCTION</scope>
</reference>
<reference key="8">
    <citation type="journal article" date="2000" name="Blood">
        <title>Hematopoietic-specific expression of MEFV, the gene mutated in familial Mediterranean fever, and subcellular localization of its corresponding protein, pyrin.</title>
        <authorList>
            <person name="Tidow N."/>
            <person name="Chen X."/>
            <person name="Muller C."/>
            <person name="Kawano S."/>
            <person name="Gombart A.F."/>
            <person name="Fischel-Ghodsian N."/>
            <person name="Koeffler H.P."/>
        </authorList>
    </citation>
    <scope>SUBCELLULAR LOCATION</scope>
    <scope>TISSUE SPECIFICITY</scope>
</reference>
<reference key="9">
    <citation type="journal article" date="2001" name="Blood">
        <title>The familial Mediterranean fever protein, pyrin, associates with microtubules and colocalizes with actin filaments.</title>
        <authorList>
            <person name="Mansfield E."/>
            <person name="Chae J.J."/>
            <person name="Komarow H.D."/>
            <person name="Brotz T.M."/>
            <person name="Frucht D.M."/>
            <person name="Aksentijevich I."/>
            <person name="Kastner D.L."/>
        </authorList>
    </citation>
    <scope>FUNCTION</scope>
    <scope>SUBCELLULAR LOCATION</scope>
</reference>
<reference key="10">
    <citation type="journal article" date="2001" name="J. Biol. Chem.">
        <title>Interaction between pyrin and the apoptotic speck protein (ASC) modulates ASC-induced apoptosis.</title>
        <authorList>
            <person name="Richards N."/>
            <person name="Schaner P."/>
            <person name="Diaz A."/>
            <person name="Stuckey J."/>
            <person name="Shelden E."/>
            <person name="Wadhwa A."/>
            <person name="Gumucio D.L."/>
        </authorList>
    </citation>
    <scope>INTERACTION WITH PYCARD</scope>
    <scope>SUBCELLULAR LOCATION</scope>
</reference>
<reference key="11">
    <citation type="journal article" date="2003" name="Proc. Natl. Acad. Sci. U.S.A.">
        <title>Pyrin binds the PSTPIP1/CD2BP1 protein, defining familial Mediterranean fever and PAPA syndrome as disorders in the same pathway.</title>
        <authorList>
            <person name="Shoham N.G."/>
            <person name="Centola M."/>
            <person name="Mansfield E."/>
            <person name="Hull K.M."/>
            <person name="Wood G."/>
            <person name="Wise C.A."/>
            <person name="Kastner D.L."/>
        </authorList>
    </citation>
    <scope>INTERACTION WITH PSTPIP1</scope>
</reference>
<reference key="12">
    <citation type="journal article" date="2002" name="Arthritis Rheum.">
        <title>Reduced MEFV messenger RNA expression in patients with familial Mediterranean fever.</title>
        <authorList>
            <person name="Notarnicola C."/>
            <person name="Didelot M.-N."/>
            <person name="Kone-Paut I."/>
            <person name="Seguret F."/>
            <person name="Demaille J."/>
            <person name="Touitou I."/>
        </authorList>
    </citation>
    <scope>DISEASE</scope>
</reference>
<reference key="13">
    <citation type="journal article" date="2006" name="Cell Death Differ.">
        <title>Cryopyrin and pyrin activate caspase-1, but not NF-kappaB, via ASC oligomerization.</title>
        <authorList>
            <person name="Yu J.W."/>
            <person name="Wu J."/>
            <person name="Zhang Z."/>
            <person name="Datta P."/>
            <person name="Ibrahimi I."/>
            <person name="Taniguchi S."/>
            <person name="Sagara J."/>
            <person name="Fernandes-Alnemri T."/>
            <person name="Alnemri E.S."/>
        </authorList>
    </citation>
    <scope>FUNCTION</scope>
    <scope>MUTAGENESIS OF LEU-16 AND PHE-24</scope>
</reference>
<reference key="14">
    <citation type="journal article" date="2006" name="Proc. Natl. Acad. Sci. U.S.A.">
        <title>The B30.2 domain of pyrin, the familial Mediterranean fever protein, interacts directly with caspase-1 to modulate IL-1beta production.</title>
        <authorList>
            <person name="Chae J.J."/>
            <person name="Wood G."/>
            <person name="Masters S.L."/>
            <person name="Richard K."/>
            <person name="Park G."/>
            <person name="Smith B.J."/>
            <person name="Kastner D.L."/>
        </authorList>
    </citation>
    <scope>INTERACTION WITH CASP1</scope>
    <scope>CHARACTERIZATION OF VARIANTS ILE-680; VAL-694 AND ALA-726</scope>
</reference>
<reference key="15">
    <citation type="journal article" date="2007" name="Cell Death Differ.">
        <title>The SPRY domain of Pyrin, mutated in familial Mediterranean fever patients, interacts with inflammasome components and inhibits proIL-1beta processing.</title>
        <authorList>
            <person name="Papin S."/>
            <person name="Cuenin S."/>
            <person name="Agostini L."/>
            <person name="Martinon F."/>
            <person name="Werner S."/>
            <person name="Beer H.D."/>
            <person name="Grutter C."/>
            <person name="Grutter M."/>
            <person name="Tschopp J."/>
        </authorList>
    </citation>
    <scope>FUNCTION</scope>
    <scope>INTERACTION WITH CASP1; CASP5; NLRP1; NLRP2; NLRP3 AND IL1B</scope>
    <scope>CHARACTERIZATION OF VARIANT VAL-694</scope>
</reference>
<reference key="16">
    <citation type="journal article" date="2007" name="Mol. Cell">
        <title>Pyrin activates the ASC pyroptosome in response to engagement by autoinflammatory PSTPIP1 mutants.</title>
        <authorList>
            <person name="Yu J.W."/>
            <person name="Fernandes-Alnemri T."/>
            <person name="Datta P."/>
            <person name="Wu J."/>
            <person name="Juliana C."/>
            <person name="Solorzano L."/>
            <person name="McCormick M."/>
            <person name="Zhang Z."/>
            <person name="Alnemri E.S."/>
        </authorList>
    </citation>
    <scope>FUNCTION</scope>
    <scope>SUBUNIT</scope>
    <scope>INTERACTION WITH PYCARD AND PSTPIP1</scope>
    <scope>INDUCTION BY RETROVIRAL INFECTION</scope>
    <scope>DOMAIN</scope>
</reference>
<reference key="17">
    <citation type="journal article" date="2008" name="Blood">
        <title>The familial Mediterranean fever protein, pyrin, is cleaved by caspase-1 and activates NF-kappaB through its N-terminal fragment.</title>
        <authorList>
            <person name="Chae J.J."/>
            <person name="Wood G."/>
            <person name="Richard K."/>
            <person name="Jaffe H."/>
            <person name="Colburn N.T."/>
            <person name="Masters S.L."/>
            <person name="Gumucio D.L."/>
            <person name="Shoham N.G."/>
            <person name="Kastner D.L."/>
        </authorList>
    </citation>
    <scope>FUNCTION</scope>
    <scope>SUBCELLULAR LOCATION</scope>
    <scope>INTERACTION WITH RELA AND NFKBIA</scope>
    <scope>PROBABLE CLEAVAGE BY CASP-1</scope>
    <scope>MUTAGENESIS OF ASP-330</scope>
</reference>
<reference key="18">
    <citation type="journal article" date="2009" name="Exp. Biol. Med. (Maywood)">
        <title>Pyrin and ASC co-localize to cellular sites that are rich in polymerizing actin.</title>
        <authorList>
            <person name="Waite A.L."/>
            <person name="Schaner P."/>
            <person name="Hu C."/>
            <person name="Richards N."/>
            <person name="Balci-Peynircioglu B."/>
            <person name="Hong A."/>
            <person name="Fox M."/>
            <person name="Gumucio D.L."/>
        </authorList>
    </citation>
    <scope>FUNCTION</scope>
    <scope>SUBCELLULAR LOCATION</scope>
    <scope>INTERACTION WITH PSTPIP1; VASP AND ACTR3</scope>
</reference>
<reference key="19">
    <citation type="journal article" date="2009" name="PLoS ONE">
        <title>Pyrin Modulates the Intracellular Distribution of PSTPIP1.</title>
        <authorList>
            <person name="Waite A.L."/>
            <person name="Schaner P."/>
            <person name="Richards N."/>
            <person name="Balci-Peynircioglu B."/>
            <person name="Masters S.L."/>
            <person name="Brydges S.D."/>
            <person name="Fox M."/>
            <person name="Hong A."/>
            <person name="Yilmaz E."/>
            <person name="Kastner D.L."/>
            <person name="Reinherz E.L."/>
            <person name="Gumucio D.L."/>
        </authorList>
    </citation>
    <scope>FUNCTION</scope>
    <scope>SUBCELLULAR LOCATION</scope>
</reference>
<reference key="20">
    <citation type="journal article" date="2015" name="J. Cell Biol.">
        <title>TRIM-mediated precision autophagy targets cytoplasmic regulators of innate immunity.</title>
        <authorList>
            <person name="Kimura T."/>
            <person name="Jain A."/>
            <person name="Choi S.W."/>
            <person name="Mandell M.A."/>
            <person name="Schroder K."/>
            <person name="Johansen T."/>
            <person name="Deretic V."/>
        </authorList>
    </citation>
    <scope>FUNCTION</scope>
    <scope>INTERACTION WITH ATG16L1; BECN1; GABARAP; GABARAPL1; GABARAPL2; MAP1LC3A; MAP1LC3C; NLRP3; TRIM21 AND ULK1</scope>
    <scope>SUBCELLULAR LOCATION</scope>
    <scope>INDUCTION BY IFNG</scope>
    <scope>DEGRADATION BY AUTOPHAGY</scope>
    <scope>CHARACTERIZATION OF VARIANTS ARFMF ILE-680; VAL-694 AND ALA-726</scope>
    <scope>MUTAGENESIS OF 397-ILE--HIS-404; 470-TYR--GLY-488 AND 523-SER--ASP-530</scope>
</reference>
<reference key="21">
    <citation type="journal article" date="2009" name="J. Mol. Biol.">
        <title>The crystal structure of human pyrin b30.2 domain: implications for mutations associated with familial Mediterranean fever.</title>
        <authorList>
            <person name="Weinert C."/>
            <person name="Grutter C."/>
            <person name="Roschitzki-Voser H."/>
            <person name="Mittl P.R."/>
            <person name="Grutter M.G."/>
        </authorList>
    </citation>
    <scope>X-RAY CRYSTALLOGRAPHY (1.35 ANGSTROMS) OF 586-776</scope>
</reference>
<reference key="22">
    <citation type="journal article" date="1998" name="Hum. Mol. Genet.">
        <title>Non-founder mutations in the MEFV gene establish this gene as the cause of familial Mediterranean fever (FMF).</title>
        <authorList>
            <person name="Bernot A."/>
            <person name="da Silva C."/>
            <person name="Petit J.-L."/>
            <person name="Cruaud C."/>
            <person name="Caloustian C."/>
            <person name="Castet V."/>
            <person name="Ahmed-Arab M."/>
            <person name="Dross C."/>
            <person name="Dupont M."/>
            <person name="Cattan D."/>
            <person name="Smaoui N."/>
            <person name="Dode C."/>
            <person name="Pecheux C."/>
            <person name="Nedelec B."/>
            <person name="Medaxian J."/>
            <person name="Rozenbaum M."/>
            <person name="Rosner I."/>
            <person name="Delpech M."/>
            <person name="Grateau G."/>
            <person name="Demaille J."/>
            <person name="Weissenbach J."/>
            <person name="Touitou I."/>
        </authorList>
    </citation>
    <scope>VARIANTS ARFMF</scope>
    <scope>VARIANT GLN-202</scope>
</reference>
<reference key="23">
    <citation type="journal article" date="1998" name="QJM">
        <title>Pyrin/marenostrin mutations in familial Mediterranean fever.</title>
        <authorList>
            <person name="Booth D.R."/>
            <person name="Gillmore J.D."/>
            <person name="Booth S.E."/>
            <person name="Pepys M.B."/>
            <person name="Hawkins P.N."/>
        </authorList>
    </citation>
    <scope>VARIANTS ARFMF ILE-680; ILE-681; ILE-694; VAL-694; MET-694 DEL AND ALA-726</scope>
</reference>
<reference key="24">
    <citation type="journal article" date="1999" name="Am. J. Hum. Genet.">
        <title>Mutation and haplotype studies of familial Mediterranean fever reveal new ancestral relationships and evidence for a high carrier frequency with reduced penetrance in the Ashkenazi Jewish population.</title>
        <authorList>
            <person name="Aksentijevich I."/>
            <person name="Torosyan Y."/>
            <person name="Samuels J."/>
            <person name="Centola M."/>
            <person name="Pras E."/>
            <person name="Chae J.J."/>
            <person name="Oddoux C."/>
            <person name="Wood G."/>
            <person name="Azzaro M.P."/>
            <person name="Palumbo G."/>
            <person name="Giustolisi R."/>
            <person name="Pras M."/>
            <person name="Ostrer H."/>
            <person name="Kastner D.L."/>
        </authorList>
    </citation>
    <scope>VARIANTS ARFMF</scope>
</reference>
<reference key="25">
    <citation type="journal article" date="1999" name="Am. J. Hum. Genet.">
        <title>MEFV-Gene analysis in Armenian patients with familial Mediterranean fever: diagnostic value and unfavorable renal prognosis of the M694V homozygous genotype-genetic and therapeutic implications.</title>
        <authorList>
            <person name="Cazeneuve C."/>
            <person name="Sarkisian T."/>
            <person name="Pecheux C."/>
            <person name="Dervichian M."/>
            <person name="Nedelec B."/>
            <person name="Reinert P."/>
            <person name="Ayvazyan A."/>
            <person name="Kouyoumdjian J.-C."/>
            <person name="Ajrapetyan H."/>
            <person name="Delpech M."/>
            <person name="Goossens M."/>
            <person name="Dode C."/>
            <person name="Grateau G."/>
            <person name="Amselem S."/>
        </authorList>
    </citation>
    <scope>VARIANTS ARFMF GLN-148; SER-369; GLN-408; LEU-479; ILE-680; VAL-694; ALA-726 AND HIS-761</scope>
</reference>
<reference key="26">
    <citation type="journal article" date="1999" name="Eur. J. Hum. Genet.">
        <title>Phenotype-genotype correlation in familial Mediterranean fever: evidence for an association between Met694Val and amyloidosis.</title>
        <authorList>
            <person name="Shohat M."/>
            <person name="Magal N."/>
            <person name="Shohat T."/>
            <person name="Chen X."/>
            <person name="Dagan T."/>
            <person name="Mimouni A."/>
            <person name="Danon Y."/>
            <person name="Lotan R."/>
            <person name="Ogur G."/>
            <person name="Sirin A."/>
            <person name="Schlezinger M."/>
            <person name="Halpern G.J."/>
            <person name="Schwabe A."/>
            <person name="Kastner D."/>
            <person name="Rotter J.I."/>
            <person name="Fischel-Ghodsian N."/>
        </authorList>
    </citation>
    <scope>VARIANTS ARFMF ILE-680; ILE-694; VAL-694 AND ALA-726</scope>
</reference>
<reference key="27">
    <citation type="journal article" date="2000" name="Hum. Mutat.">
        <title>MEFV mutations in Turkish patients suffering from familial Mediterranean fever.</title>
        <authorList>
            <person name="Akar N."/>
            <person name="Misiroglu M."/>
            <person name="Yalcinkaya F."/>
            <person name="Akar E."/>
            <person name="Cakar N."/>
            <person name="Tumer N."/>
            <person name="Akcakus M."/>
            <person name="Tastan H."/>
            <person name="Matzner Y."/>
        </authorList>
    </citation>
    <scope>VARIANTS ARFMF GLN-148; ILE-680; ILE-694; VAL-694; ARG-695; ALA-726 AND HIS-761</scope>
</reference>
<reference key="28">
    <citation type="journal article" date="2000" name="Hum. Mutat.">
        <title>The E148Q mutation in the MEFV gene: is it a disease-causing mutation or a sequence variant?</title>
        <authorList>
            <person name="Ben-Chetrit E."/>
            <person name="Lerer I."/>
            <person name="Malamud E."/>
            <person name="Domingo C."/>
            <person name="Abeliovich D."/>
        </authorList>
    </citation>
    <scope>VARIANT GLN-148</scope>
</reference>
<reference key="29">
    <citation type="journal article" date="2000" name="Eur. J. Hum. Genet.">
        <title>Familial Mediterranean fever in the 'Chuetas' of Mallorca: a question of Jewish origin or genetic heterogeneity.</title>
        <authorList>
            <person name="Domingo C."/>
            <person name="Touitou I."/>
            <person name="Bayou A."/>
            <person name="Ozen S."/>
            <person name="Notarnicola C."/>
            <person name="Dewalle M."/>
            <person name="Demaille J."/>
            <person name="Buades R."/>
            <person name="Sayadat C."/>
            <person name="Levy M."/>
            <person name="Ben-Chetrit E."/>
        </authorList>
    </citation>
    <scope>VARIANTS ARFMF PRO-110; GLN-148 AND VAL-694</scope>
</reference>
<reference key="30">
    <citation type="journal article" date="2000" name="Am. J. Med. Genet.">
        <title>Mutations in the MEFV gene in a large series of patients with a clinical diagnosis of familial Mediterranean fever.</title>
        <authorList>
            <person name="Dode C."/>
            <person name="Pecheux C."/>
            <person name="Cazeneuve C."/>
            <person name="Cattan D."/>
            <person name="Dervichian M."/>
            <person name="Goossens M."/>
            <person name="Delpech M."/>
            <person name="Amselem S."/>
            <person name="Grateau G."/>
        </authorList>
    </citation>
    <scope>VARIANTS ARFMF ASN-675; LEU-680 AND ILE-692 DEL</scope>
</reference>
<reference key="31">
    <citation type="journal article" date="2000" name="QJM">
        <title>The genetic basis of autosomal dominant familial Mediterranean fever.</title>
        <authorList>
            <person name="Booth D.R."/>
            <person name="Gillmore J.D."/>
            <person name="Lachmann H.J."/>
            <person name="Booth S.E."/>
            <person name="Bybee A."/>
            <person name="Soytuerk M."/>
            <person name="Akar S."/>
            <person name="Pepys M.B."/>
            <person name="Tunca M."/>
            <person name="Hawkins P.N."/>
        </authorList>
    </citation>
    <scope>VARIANTS ADFMF GLN-148; ILE-680; ILE-694; MET-694 DEL AND VAL-694</scope>
</reference>
<reference key="32">
    <citation type="journal article" date="2001" name="Eur. J. Hum. Genet.">
        <title>The spectrum of familial mediterranean fever (FMF) mutations.</title>
        <authorList>
            <person name="Touitou I."/>
        </authorList>
    </citation>
    <scope>REVIEW</scope>
    <scope>VARIANT ARFMF TRP-42</scope>
</reference>
<reference key="33">
    <citation type="journal article" date="2002" name="Hum. Mutat.">
        <title>I591T MEFV mutation in a Spanish kindred: is it a mild mutation, a benign polymorphism, or a variant influenced by another modifier?</title>
        <authorList>
            <person name="Aldea A."/>
            <person name="Casademont J."/>
            <person name="Arostegui J.I."/>
            <person name="Rius J."/>
            <person name="Maso M."/>
            <person name="Vives J."/>
            <person name="Yague J."/>
        </authorList>
    </citation>
    <scope>VARIANT ARFMF THR-591</scope>
</reference>
<reference key="34">
    <citation type="journal article" date="2004" name="Am. J. Med. Genet. A">
        <title>A severe autosomal-dominant periodic inflammatory disorder with renal AA amyloidosis and colchicine resistance associated to the MEFV H478Y variant in a Spanish kindred: an unusual familial Mediterranean fever phenotype or another MEFV-associated periodic inflammatory disorder?</title>
        <authorList>
            <person name="Aldea A."/>
            <person name="Campistol J.M."/>
            <person name="Arostegui J.I."/>
            <person name="Rius J."/>
            <person name="Maso M."/>
            <person name="Vives J."/>
            <person name="Yaguee J."/>
        </authorList>
    </citation>
    <scope>VARIANT ADFMF TYR-478</scope>
</reference>
<reference key="35">
    <citation type="journal article" date="2004" name="Hum. Mutat.">
        <title>The west side story: MEFV haplotype in Spanish FMF patients and controls, and evidence of high LD and a recombination 'hot-spot' at the MEFV locus.</title>
        <authorList>
            <person name="Aldea A."/>
            <person name="Calafell F."/>
            <person name="Arostegui J.I."/>
            <person name="Lao O."/>
            <person name="Rius J."/>
            <person name="Plaza S."/>
            <person name="Maso M."/>
            <person name="Vives J."/>
            <person name="Buades J."/>
            <person name="Yaguee J."/>
        </authorList>
    </citation>
    <scope>VARIANTS ARFMF ALA-163 AND LYS-319</scope>
    <scope>VARIANT SER-744</scope>
</reference>
<reference key="36">
    <citation type="journal article" date="2005" name="Eur. J. Med. Genet.">
        <title>Familial Mediterranean fever (FMF) in Lebanon and Jordan: a population genetics study and report of three novel mutations.</title>
        <authorList>
            <person name="Medlej-Hashim M."/>
            <person name="Serre J.-L."/>
            <person name="Corbani S."/>
            <person name="Saab O."/>
            <person name="Jalkh N."/>
            <person name="Delague V."/>
            <person name="Chouery E."/>
            <person name="Salem N."/>
            <person name="Loiselet J."/>
            <person name="Lefranc G."/>
            <person name="Megarbane A."/>
        </authorList>
    </citation>
    <scope>VARIANTS ARFMF ARG-108; GLN-148; VAL-148; ASP-167; ILE-177; ILE-267; LYS-474; LEU-479; HIS-653; ILE-680; ILE-694; VAL-694; ARG-695; MET-720; ALA-726; SER-744 AND HIS-761</scope>
</reference>
<reference key="37">
    <citation type="journal article" date="2006" name="Biochem. Biophys. Res. Commun.">
        <title>Mutational analysis of the PRYSPRY domain of pyrin and implications for familial mediterranean fever (FMF).</title>
        <authorList>
            <person name="Goulielmos G.N."/>
            <person name="Fragouli E."/>
            <person name="Aksentijevich I."/>
            <person name="Sidiropoulos P."/>
            <person name="Boumpas D.T."/>
            <person name="Eliopoulos E."/>
        </authorList>
    </citation>
    <scope>VARIANTS ARFMF SER-632; MET-640; PHE-641; LEU-646; PRO-649; HIS-653; ALA-656; ASN-661; ASN-675; GLU-678; LEU-680; ILE-681; CYS-688; ILE-694; LEU-694; VAL-694; MET-695; ARG-695; ILE-704; SER-705; MET-720; ALA-726; LEU-743; SER-744; SER-758; HIS-761 AND THR-780</scope>
    <scope>VARIANT CYS-702</scope>
</reference>
<reference key="38">
    <citation type="journal article" date="2012" name="Gene">
        <title>Prevalence of known mutations and a novel missense mutation (M694K) in the MEFV gene in a population from the Eastern Anatolia Region of Turkey.</title>
        <authorList>
            <person name="Yesilada E."/>
            <person name="Taskapan H."/>
            <person name="Gulbay G."/>
        </authorList>
    </citation>
    <scope>VARIANT ARFMF LYS-694</scope>
</reference>
<reference key="39">
    <citation type="journal article" date="2014" name="Ann. Rheum. Dis.">
        <title>MEFV mutations affecting pyrin amino acid 577 cause autosomal dominant autoinflammatory disease.</title>
        <authorList>
            <person name="Stoffels M."/>
            <person name="Szperl A."/>
            <person name="Simon A."/>
            <person name="Netea M.G."/>
            <person name="Plantinga T.S."/>
            <person name="van Deuren M."/>
            <person name="Kamphuis S."/>
            <person name="Lachmann H.J."/>
            <person name="Cuppen E."/>
            <person name="Kloosterman W.P."/>
            <person name="Frenkel J."/>
            <person name="van Diemen C.C."/>
            <person name="Wijmenga C."/>
            <person name="van Gijn M."/>
            <person name="van der Meer J.W."/>
        </authorList>
    </citation>
    <scope>VARIANTS ILE-267; SER-369; GLN-408; ALA-577; ASN-577 AND SER-577</scope>
    <scope>INVOLVEMENT IN AUTOSOMAL DOMINANT INFLAMMATORY DISEASE</scope>
</reference>
<reference key="40">
    <citation type="journal article" date="2014" name="Gene">
        <title>Frequency of MEFV gene mutations in Hatay province, Mediterranean region of Turkey and report of a novel missense mutation (I247V).</title>
        <authorList>
            <person name="Gunesacar R."/>
            <person name="Celik M.M."/>
            <person name="Arica V."/>
            <person name="Elmacioglu S."/>
            <person name="Ozturk O.H."/>
        </authorList>
    </citation>
    <scope>VARIANTS ARFMF PRO-110; GLN-148; TRP-196; LYS-230; VAL-247; LEU-283; ARG-304; ALA-632; ILE-680; ILE-694; VAL-694; ARG-695; ALA-726; SER-744 AND HIS-761</scope>
    <scope>VARIANT GLN-202</scope>
</reference>
<reference key="41">
    <citation type="journal article" date="2016" name="Sci. Transl. Med.">
        <title>Familial autoinflammation with neutrophilic dermatosis reveals a regulatory mechanism of pyrin activation.</title>
        <authorList>
            <person name="Masters S.L."/>
            <person name="Lagou V."/>
            <person name="Jeru I."/>
            <person name="Baker P.J."/>
            <person name="Van Eyck L."/>
            <person name="Parry D.A."/>
            <person name="Lawless D."/>
            <person name="De Nardo D."/>
            <person name="Garcia-Perez J.E."/>
            <person name="Dagley L.F."/>
            <person name="Holley C.L."/>
            <person name="Dooley J."/>
            <person name="Moghaddas F."/>
            <person name="Pasciuto E."/>
            <person name="Jeandel P.Y."/>
            <person name="Sciot R."/>
            <person name="Lyras D."/>
            <person name="Webb A.I."/>
            <person name="Nicholson S.E."/>
            <person name="De Somer L."/>
            <person name="van Nieuwenhove E."/>
            <person name="Ruuth-Praz J."/>
            <person name="Copin B."/>
            <person name="Cochet E."/>
            <person name="Medlej-Hashim M."/>
            <person name="Megarbane A."/>
            <person name="Schroder K."/>
            <person name="Savic S."/>
            <person name="Goris A."/>
            <person name="Amselem S."/>
            <person name="Wouters C."/>
            <person name="Liston A."/>
        </authorList>
    </citation>
    <scope>VARIANT PAAND ARG-242</scope>
    <scope>INVOLVEMENT IN PAAND</scope>
    <scope>FUNCTION</scope>
    <scope>PHOSPHORYLATION AT SER-242</scope>
    <scope>INTERACTION WITH YWHAB; YWHAE; YWHAG; YWHAH; YWHAQ AND YWHAZ</scope>
    <scope>CHARACTERIZATION OF VARIANT PAAND ARG-242</scope>
    <scope>CHARACTERIZATION OF VARIANT GLN-202</scope>
    <scope>CHARACTERIZATION OF VARIANTS ARFMF ARG-304; ILE-680; ILE-694 AND ALA-726</scope>
</reference>
<reference key="42">
    <citation type="journal article" date="2017" name="Ann. Rheum. Dis.">
        <title>A novel pyrin-associated autoinflammation with neutrophilic dermatosis mutation further defines 14-3-3 binding of pyrin and distinction to Familial Mediterranean Fever.</title>
        <authorList>
            <person name="Moghaddas F."/>
            <person name="Llamas R."/>
            <person name="De Nardo D."/>
            <person name="Martinez-Banaclocha H."/>
            <person name="Martinez-Garcia J.J."/>
            <person name="Mesa-Del-Castillo P."/>
            <person name="Baker P.J."/>
            <person name="Gargallo V."/>
            <person name="Mensa-Vilaro A."/>
            <person name="Canna S."/>
            <person name="Wicks I.P."/>
            <person name="Pelegrin P."/>
            <person name="Arostegui J.I."/>
            <person name="Masters S.L."/>
        </authorList>
    </citation>
    <scope>VARIANT PAAND LYS-244</scope>
    <scope>CHARACTERIZATION OF VARIANT PAAND LYS-244</scope>
    <scope>FUNCTION</scope>
    <scope>INTERACTION WITH YWHAE AND YWHAQ</scope>
    <scope>INTERACTION WITH PSTPIP1</scope>
    <scope>MUTAGENESIS OF SER-208 AND GLU-244</scope>
</reference>
<organism>
    <name type="scientific">Homo sapiens</name>
    <name type="common">Human</name>
    <dbReference type="NCBI Taxonomy" id="9606"/>
    <lineage>
        <taxon>Eukaryota</taxon>
        <taxon>Metazoa</taxon>
        <taxon>Chordata</taxon>
        <taxon>Craniata</taxon>
        <taxon>Vertebrata</taxon>
        <taxon>Euteleostomi</taxon>
        <taxon>Mammalia</taxon>
        <taxon>Eutheria</taxon>
        <taxon>Euarchontoglires</taxon>
        <taxon>Primates</taxon>
        <taxon>Haplorrhini</taxon>
        <taxon>Catarrhini</taxon>
        <taxon>Hominidae</taxon>
        <taxon>Homo</taxon>
    </lineage>
</organism>
<gene>
    <name evidence="46 51" type="primary">MEFV</name>
    <name type="synonym">MEF</name>
    <name evidence="47" type="synonym">TRIM20</name>
</gene>
<name>MEFV_HUMAN</name>
<evidence type="ECO:0000250" key="1">
    <source>
        <dbReference type="UniProtKB" id="Q9JJ26"/>
    </source>
</evidence>
<evidence type="ECO:0000255" key="2"/>
<evidence type="ECO:0000255" key="3">
    <source>
        <dbReference type="PROSITE-ProRule" id="PRU00024"/>
    </source>
</evidence>
<evidence type="ECO:0000255" key="4">
    <source>
        <dbReference type="PROSITE-ProRule" id="PRU00061"/>
    </source>
</evidence>
<evidence type="ECO:0000255" key="5">
    <source>
        <dbReference type="PROSITE-ProRule" id="PRU00548"/>
    </source>
</evidence>
<evidence type="ECO:0000256" key="6">
    <source>
        <dbReference type="SAM" id="MobiDB-lite"/>
    </source>
</evidence>
<evidence type="ECO:0000269" key="7">
    <source>
    </source>
</evidence>
<evidence type="ECO:0000269" key="8">
    <source>
    </source>
</evidence>
<evidence type="ECO:0000269" key="9">
    <source>
    </source>
</evidence>
<evidence type="ECO:0000269" key="10">
    <source>
    </source>
</evidence>
<evidence type="ECO:0000269" key="11">
    <source>
    </source>
</evidence>
<evidence type="ECO:0000269" key="12">
    <source>
    </source>
</evidence>
<evidence type="ECO:0000269" key="13">
    <source>
    </source>
</evidence>
<evidence type="ECO:0000269" key="14">
    <source>
    </source>
</evidence>
<evidence type="ECO:0000269" key="15">
    <source>
    </source>
</evidence>
<evidence type="ECO:0000269" key="16">
    <source>
    </source>
</evidence>
<evidence type="ECO:0000269" key="17">
    <source>
    </source>
</evidence>
<evidence type="ECO:0000269" key="18">
    <source>
    </source>
</evidence>
<evidence type="ECO:0000269" key="19">
    <source>
    </source>
</evidence>
<evidence type="ECO:0000269" key="20">
    <source>
    </source>
</evidence>
<evidence type="ECO:0000269" key="21">
    <source>
    </source>
</evidence>
<evidence type="ECO:0000269" key="22">
    <source>
    </source>
</evidence>
<evidence type="ECO:0000269" key="23">
    <source>
    </source>
</evidence>
<evidence type="ECO:0000269" key="24">
    <source>
    </source>
</evidence>
<evidence type="ECO:0000269" key="25">
    <source>
    </source>
</evidence>
<evidence type="ECO:0000269" key="26">
    <source>
    </source>
</evidence>
<evidence type="ECO:0000269" key="27">
    <source>
    </source>
</evidence>
<evidence type="ECO:0000269" key="28">
    <source>
    </source>
</evidence>
<evidence type="ECO:0000269" key="29">
    <source>
    </source>
</evidence>
<evidence type="ECO:0000269" key="30">
    <source>
    </source>
</evidence>
<evidence type="ECO:0000269" key="31">
    <source>
    </source>
</evidence>
<evidence type="ECO:0000269" key="32">
    <source>
    </source>
</evidence>
<evidence type="ECO:0000269" key="33">
    <source>
    </source>
</evidence>
<evidence type="ECO:0000269" key="34">
    <source>
    </source>
</evidence>
<evidence type="ECO:0000269" key="35">
    <source>
    </source>
</evidence>
<evidence type="ECO:0000269" key="36">
    <source>
    </source>
</evidence>
<evidence type="ECO:0000269" key="37">
    <source>
    </source>
</evidence>
<evidence type="ECO:0000269" key="38">
    <source>
    </source>
</evidence>
<evidence type="ECO:0000269" key="39">
    <source>
    </source>
</evidence>
<evidence type="ECO:0000269" key="40">
    <source>
    </source>
</evidence>
<evidence type="ECO:0000269" key="41">
    <source>
    </source>
</evidence>
<evidence type="ECO:0000269" key="42">
    <source>
    </source>
</evidence>
<evidence type="ECO:0000269" key="43">
    <source>
    </source>
</evidence>
<evidence type="ECO:0000269" key="44">
    <source>
    </source>
</evidence>
<evidence type="ECO:0000269" key="45">
    <source>
    </source>
</evidence>
<evidence type="ECO:0000303" key="46">
    <source>
    </source>
</evidence>
<evidence type="ECO:0000303" key="47">
    <source>
    </source>
</evidence>
<evidence type="ECO:0000303" key="48">
    <source>
    </source>
</evidence>
<evidence type="ECO:0000305" key="49"/>
<evidence type="ECO:0000305" key="50">
    <source>
    </source>
</evidence>
<evidence type="ECO:0000312" key="51">
    <source>
        <dbReference type="HGNC" id="HGNC:6998"/>
    </source>
</evidence>
<evidence type="ECO:0007829" key="52">
    <source>
        <dbReference type="PDB" id="2MPC"/>
    </source>
</evidence>
<evidence type="ECO:0007829" key="53">
    <source>
        <dbReference type="PDB" id="2WL1"/>
    </source>
</evidence>
<evidence type="ECO:0007829" key="54">
    <source>
        <dbReference type="PDB" id="4CG4"/>
    </source>
</evidence>
<comment type="function">
    <text evidence="1 15 20 28 31 32 33 34 35 36 40 41 42">Involved in the regulation of innate immunity and the inflammatory response in response to IFNG/IFN-gamma (PubMed:10807793, PubMed:11468188, PubMed:16037825, PubMed:16785446, PubMed:17431422, PubMed:17964261, PubMed:18577712, PubMed:19109554, PubMed:19584923, PubMed:26347139, PubMed:27030597, PubMed:28835462). Organizes autophagic machinery by serving as a platform for the assembly of ULK1, Beclin 1/BECN1, ATG16L1, and ATG8 family members and recognizes specific autophagy targets, thus coordinating target recognition with assembly of the autophagic apparatus and initiation of autophagy (PubMed:16785446, PubMed:17431422, PubMed:26347139). Acts as an autophagy receptor for the degradation of several inflammasome components, including CASP1, NLRP1 and NLRP3, hence preventing excessive IL1B- and IL18-mediated inflammation (PubMed:16785446, PubMed:17431422, PubMed:26347139). However, it can also have a positive effect in the inflammatory pathway, acting as an innate immune sensor that triggers PYCARD/ASC specks formation, caspase-1 activation, and IL1B and IL18 production (PubMed:16037825, PubMed:27030597, PubMed:28835462). Together with AIM2, also acts as a mediator of pyroptosis, necroptosis and apoptosis (PANoptosis), an integral part of host defense against pathogens, in response to bacterial infection (By similarity). It is required for PSTPIP1-induced PYCARD/ASC oligomerization and inflammasome formation (PubMed:10807793, PubMed:11468188, PubMed:17964261, PubMed:18577712, PubMed:19109554, PubMed:19584923). Recruits PSTPIP1 to inflammasomes, and is required for PSTPIP1 oligomerization (PubMed:10807793, PubMed:11468188, PubMed:17964261, PubMed:18577712, PubMed:19109554, PubMed:19584923).</text>
</comment>
<comment type="subunit">
    <text evidence="1 22 24 31 32 33 34 35 40 41 42">Homotrimer. Interacts (via the B box-type zinc finger) with PSTPIP1 (PubMed:14595024, PubMed:17964261, PubMed:19109554, PubMed:28835462). Interacts (via the B30.2/SPRY domain) with several components of the inflammasome complex, including CASP1 p20 and p10 subunits, CASP5, PYCARD, NLRP1, NLRP2 and NLRP3, as well as with unprocessed IL1B; this interaction may lead to autophagic degradation of these proteins (PubMed:11498534, PubMed:16785446, PubMed:17431422, PubMed:17964261, PubMed:26347139). Component of the AIM2 PANoptosome complex, a multiprotein complex that drives inflammatory cell death (PANoptosis) (By similarity). Interacts with NFKBIA and RELA (PubMed:18577712). Interacts weakly with VASP and ACTR3 (PubMed:19109554). Interacts with active ULK1 (phosphorylated on 'Ser-317') and BECN1 simultaneously. Also interacts with ATG16L1 (via WD repeats), and with ATG8 family members, including GABARAP, GABARAPL1 and, to a lesser extent, GABARAPL2, MAP1LC3A/LC3A and MAP1LC3C/LC3C. Interacts with TRIM21 (PubMed:26347139, PubMed:28835462). Interacts with YWHAB, YWHAE, YWHAG, YWHAH, YWHAQ and YWHAZ; the interaction is required for the down-regulation of pyrin pro-inflammatory activity (PubMed:27030597, PubMed:28835462).</text>
</comment>
<comment type="interaction">
    <interactant intactId="EBI-7644532">
        <id>O15553</id>
    </interactant>
    <interactant intactId="EBI-516667">
        <id>P29466</id>
        <label>CASP1</label>
    </interactant>
    <organismsDiffer>false</organismsDiffer>
    <experiments>2</experiments>
</comment>
<comment type="interaction">
    <interactant intactId="EBI-7644532">
        <id>O15553</id>
    </interactant>
    <interactant intactId="EBI-7644532">
        <id>O15553</id>
        <label>MEFV</label>
    </interactant>
    <organismsDiffer>false</organismsDiffer>
    <experiments>8</experiments>
</comment>
<comment type="interaction">
    <interactant intactId="EBI-7644532">
        <id>O15553</id>
    </interactant>
    <interactant intactId="EBI-1050964">
        <id>O43586</id>
        <label>PSTPIP1</label>
    </interactant>
    <organismsDiffer>false</organismsDiffer>
    <experiments>4</experiments>
</comment>
<comment type="interaction">
    <interactant intactId="EBI-7644532">
        <id>O15553</id>
    </interactant>
    <interactant intactId="EBI-751215">
        <id>Q9ULZ3</id>
        <label>PYCARD</label>
    </interactant>
    <organismsDiffer>false</organismsDiffer>
    <experiments>8</experiments>
</comment>
<comment type="interaction">
    <interactant intactId="EBI-15588296">
        <id>O15553-2</id>
    </interactant>
    <interactant intactId="EBI-516667">
        <id>P29466</id>
        <label>CASP1</label>
    </interactant>
    <organismsDiffer>false</organismsDiffer>
    <experiments>3</experiments>
</comment>
<comment type="subcellular location">
    <molecule>Isoform 1</molecule>
    <subcellularLocation>
        <location evidence="20 35">Cytoplasm</location>
        <location evidence="20 35">Cytoskeleton</location>
    </subcellularLocation>
    <subcellularLocation>
        <location evidence="20">Cell projection</location>
        <location evidence="20">Ruffle</location>
    </subcellularLocation>
    <subcellularLocation>
        <location evidence="20">Cell projection</location>
        <location evidence="20">Lamellipodium</location>
    </subcellularLocation>
    <subcellularLocation>
        <location evidence="18">Nucleus</location>
    </subcellularLocation>
    <subcellularLocation>
        <location evidence="12 22 34 36 40">Cytoplasm</location>
    </subcellularLocation>
    <subcellularLocation>
        <location evidence="40">Cytoplasmic vesicle</location>
        <location evidence="40">Autophagosome</location>
    </subcellularLocation>
    <text evidence="20">Associated with microtubules and with the filamentous actin of perinuclear filaments and peripheral lamellar ruffles (PubMed:11468188). In pre-apoptotic cells, colocalizes with PYCARD/ASC in large specks (inflammasomes) (PubMed:11468188). In migrating monocytes, strongly polarized at the leading edge of the cell where it colocalizes with polymerizing actin and PYCARD/ASC (PubMed:11468188).</text>
</comment>
<comment type="subcellular location">
    <molecule>Isoform 2</molecule>
    <subcellularLocation>
        <location evidence="18">Nucleus</location>
    </subcellularLocation>
</comment>
<comment type="alternative products">
    <event type="alternative splicing"/>
    <isoform>
        <id>O15553-2</id>
        <name>1</name>
        <name>FL</name>
        <sequence type="displayed"/>
    </isoform>
    <isoform>
        <id>O15553-1</id>
        <name>2</name>
        <name>D2</name>
        <sequence type="described" ref="VSP_008223"/>
    </isoform>
    <isoform>
        <id>O15553-3</id>
        <name>3</name>
        <sequence type="described" ref="VSP_008223 VSP_047663"/>
    </isoform>
</comment>
<comment type="tissue specificity">
    <text evidence="12 15 18">Expressed in peripheral blood leukocytes, particularly in mature granulocytes and to a lesser extent in monocytes but not in lymphocytes. Detected in spleen, lung and muscle, probably as a result of leukocyte infiltration in these tissues. Not expressed in thymus, prostate, testis, ovary, small intestine, colon, heart, brain, placenta, liver, kidney, pancreas. Expression detected in several myeloid leukemic, colon cancer, and prostate cancer cell lines.</text>
</comment>
<comment type="developmental stage">
    <text evidence="15">First detected in bone marrow promyelocytes. Expression increases throughout myelocyte differentiation and peaks in the mature myelomonocytic cells.</text>
</comment>
<comment type="induction">
    <text evidence="15 33 40">In monocytes, up-regulated by treatment with colchicine and IFN-alpha, by the pro-inflammatory cytokines IFNG/IFN-gamma and TNF, by bacterial lipopolysaccharides (LPS) and by retroviral infection. Repressed in monocytes by the anti-inflammatory cytokines IL10/interleukin-10, TGFB1 and IL4/interleukin-4. In neutrophils and macrophages, up-regulated by IFNG/IFN-gamma with a peak after 8 hours of treatment.</text>
</comment>
<comment type="domain">
    <text evidence="33">The B box-type zinc finger interacts, possibly intramolecularly, with the pyrin domain; this may be an autoinhibitory mechanism released by PSTPIP1 binding.</text>
</comment>
<comment type="PTM">
    <text evidence="50">Cleaved by CASP1 (Probable). The N-terminal cleavage product localizes to the nucleus as a filamentous network and to the cytoplasm, interacts more strongly with RELA and NFKBIA than the full-length protein, enhances the nuclear localization of RELA and induces NFKBIA proteolysis. The C-terminal cleavage product localizes to the cytoplasm (Probable).</text>
</comment>
<comment type="PTM">
    <text evidence="41">Phosphorylation at Ser-242 is required for the interaction with 14-3-3 proteins and down-regulation of pyrin pro-inflammatory activity.</text>
</comment>
<comment type="PTM">
    <text evidence="40">Degraded along with the delivery of its substrates to autolysosomal compartments (at protein level).</text>
</comment>
<comment type="disease" evidence="7 8 9 10 11 16 17 19 21 23 26 29 30 37 39 40 41 43 44 45">
    <disease id="DI-00496">
        <name>Familial Mediterranean fever, autosomal recessive</name>
        <acronym>ARFMF</acronym>
        <description>A hereditary periodic fever syndrome characterized by recurrent episodic fever, serosal inflammation and pain in the abdomen, chest or joints. It is frequently complicated by reactive amyloidosis, which leads to renal failure and can be prophylactically treated with colchicine.</description>
        <dbReference type="MIM" id="249100"/>
    </disease>
    <text evidence="40">The disease is caused by variants affecting the gene represented in this entry. The disease-associated mutations in the B30.2/SPRY domain perturb ULK1 recruitment and autophagic degradation of inflammasome components, including NLRP3, and hence may contribute to the inflammatory phenotype associated with ARFMF.</text>
</comment>
<comment type="disease" evidence="14 25">
    <disease id="DI-00495">
        <name>Familial Mediterranean fever, autosomal dominant</name>
        <acronym>ADFMF</acronym>
        <description>A hereditary periodic fever syndrome characterized by periodic fever, serosal inflammation and pain in the abdomen, chest or joints as seen also in the autosomal recessive form of the disease. It is associated with reactive renal amyloidosis and characterized by colchicine unresponsiveness.</description>
        <dbReference type="MIM" id="134610"/>
    </disease>
    <text>The disease is caused by variants affecting the gene represented in this entry.</text>
</comment>
<comment type="disease" evidence="41 42">
    <disease id="DI-05865">
        <name>Pyrin-associated autoinflammatory disease</name>
        <acronym>PAAND</acronym>
        <description>An autosomal dominant autoinflammatory disorder characterized by childhood onset of recurrent episodes of fever, neutrophilic dermatosis, myalgia and arthralgia. The neutrophilic dermatosis comprises a spectrum of clinical manifestations, including severe acne, sterile skin abscesses, pyoderma gangrenosum, and neutrophilic small-vessel vasculitis. Pathological examination of affected skin shows a dense, predominantly neutrophilic, vascular, perivascular, and interstitial infiltrate. PAAND has incomplete penetrance and variable expressivity.</description>
        <dbReference type="MIM" id="608068"/>
    </disease>
    <text>The disease is caused by variants affecting the gene represented in this entry.</text>
</comment>
<comment type="online information" name="INFEVERS">
    <link uri="https://infevers.umai-montpellier.fr/web/search.php?n=1"/>
    <text>Repertory of FMF and hereditary autoinflammatory disorders mutations</text>
</comment>
<proteinExistence type="evidence at protein level"/>
<keyword id="KW-0002">3D-structure</keyword>
<keyword id="KW-0009">Actin-binding</keyword>
<keyword id="KW-0025">Alternative splicing</keyword>
<keyword id="KW-1008">Amyloidosis</keyword>
<keyword id="KW-0966">Cell projection</keyword>
<keyword id="KW-0175">Coiled coil</keyword>
<keyword id="KW-0963">Cytoplasm</keyword>
<keyword id="KW-0968">Cytoplasmic vesicle</keyword>
<keyword id="KW-0206">Cytoskeleton</keyword>
<keyword id="KW-0225">Disease variant</keyword>
<keyword id="KW-0391">Immunity</keyword>
<keyword id="KW-0395">Inflammatory response</keyword>
<keyword id="KW-0399">Innate immunity</keyword>
<keyword id="KW-0479">Metal-binding</keyword>
<keyword id="KW-0493">Microtubule</keyword>
<keyword id="KW-0539">Nucleus</keyword>
<keyword id="KW-0597">Phosphoprotein</keyword>
<keyword id="KW-1267">Proteomics identification</keyword>
<keyword id="KW-1185">Reference proteome</keyword>
<keyword id="KW-0862">Zinc</keyword>
<keyword id="KW-0863">Zinc-finger</keyword>
<protein>
    <recommendedName>
        <fullName evidence="48">Pyrin</fullName>
    </recommendedName>
    <alternativeName>
        <fullName evidence="46">Marenostrin</fullName>
    </alternativeName>
</protein>